<keyword id="KW-0002">3D-structure</keyword>
<keyword id="KW-0007">Acetylation</keyword>
<keyword id="KW-0025">Alternative splicing</keyword>
<keyword id="KW-0963">Cytoplasm</keyword>
<keyword id="KW-0903">Direct protein sequencing</keyword>
<keyword id="KW-0945">Host-virus interaction</keyword>
<keyword id="KW-1017">Isopeptide bond</keyword>
<keyword id="KW-0539">Nucleus</keyword>
<keyword id="KW-0597">Phosphoprotein</keyword>
<keyword id="KW-1267">Proteomics identification</keyword>
<keyword id="KW-1185">Reference proteome</keyword>
<keyword id="KW-0832">Ubl conjugation</keyword>
<reference key="1">
    <citation type="journal article" date="1995" name="Proc. Natl. Acad. Sci. U.S.A.">
        <title>14-3-3 proteins associate with cdc25 phosphatases.</title>
        <authorList>
            <person name="Conklin D.S."/>
            <person name="Galaktionov K."/>
            <person name="Beach D."/>
        </authorList>
    </citation>
    <scope>NUCLEOTIDE SEQUENCE [MRNA] (ISOFORM 1)</scope>
</reference>
<reference key="2">
    <citation type="journal article" date="1996" name="Genome Res.">
        <title>14-3-3 epsilon has no homology to LIS1 and lies telomeric to it on chromosome 17p13.3 outside the Miller-Dieker syndrome chromosome region.</title>
        <authorList>
            <person name="Chong S.S."/>
            <person name="Tanigami A."/>
            <person name="Roschke A.V."/>
            <person name="Ledbetter D.H."/>
        </authorList>
    </citation>
    <scope>NUCLEOTIDE SEQUENCE [MRNA] (ISOFORM 1)</scope>
    <source>
        <tissue>Liver</tissue>
    </source>
</reference>
<reference key="3">
    <citation type="journal article" date="1996" name="Nature">
        <title>Function of 14-3-3 proteins.</title>
        <authorList>
            <person name="Jin D.-Y."/>
            <person name="Lyu M.S."/>
            <person name="Kozak C.A."/>
            <person name="Jeang K.-T."/>
        </authorList>
    </citation>
    <scope>NUCLEOTIDE SEQUENCE [MRNA] (ISOFORM 1)</scope>
</reference>
<reference key="4">
    <citation type="journal article" date="2010" name="Biochem. Biophys. Res. Commun.">
        <title>Functional identification of a novel 14-3-3 epsilon splicing variant suggests dimerization is not necessary for 14-3-3 epsilon to inhibit UV-induced apoptosis.</title>
        <authorList>
            <person name="Han D."/>
            <person name="Ye G."/>
            <person name="Liu T."/>
            <person name="Chen C."/>
            <person name="Yang X."/>
            <person name="Wan B."/>
            <person name="Pan Y."/>
            <person name="Yu L."/>
        </authorList>
    </citation>
    <scope>NUCLEOTIDE SEQUENCE [MRNA] (ISOFORM SV)</scope>
    <scope>ALTERNATIVE SPLICING</scope>
    <source>
        <tissue>Brain</tissue>
    </source>
</reference>
<reference key="5">
    <citation type="submission" date="1995-06" db="EMBL/GenBank/DDBJ databases">
        <title>Sequence determination of human epsilon 14-3-3 protein.</title>
        <authorList>
            <person name="Luk S.C.W."/>
            <person name="Lee C.Y."/>
            <person name="Waye M.M.Y."/>
        </authorList>
    </citation>
    <scope>NUCLEOTIDE SEQUENCE [MRNA] (ISOFORM 1)</scope>
    <source>
        <tissue>Heart</tissue>
    </source>
</reference>
<reference key="6">
    <citation type="submission" date="1998-08" db="EMBL/GenBank/DDBJ databases">
        <title>14-3-3 epsilon genomic sequence.</title>
        <authorList>
            <person name="Tanigami A."/>
            <person name="Chong S.S."/>
            <person name="Ledbetter D.H."/>
        </authorList>
    </citation>
    <scope>NUCLEOTIDE SEQUENCE [GENOMIC DNA]</scope>
</reference>
<reference key="7">
    <citation type="journal article" date="2004" name="Nat. Genet.">
        <title>Complete sequencing and characterization of 21,243 full-length human cDNAs.</title>
        <authorList>
            <person name="Ota T."/>
            <person name="Suzuki Y."/>
            <person name="Nishikawa T."/>
            <person name="Otsuki T."/>
            <person name="Sugiyama T."/>
            <person name="Irie R."/>
            <person name="Wakamatsu A."/>
            <person name="Hayashi K."/>
            <person name="Sato H."/>
            <person name="Nagai K."/>
            <person name="Kimura K."/>
            <person name="Makita H."/>
            <person name="Sekine M."/>
            <person name="Obayashi M."/>
            <person name="Nishi T."/>
            <person name="Shibahara T."/>
            <person name="Tanaka T."/>
            <person name="Ishii S."/>
            <person name="Yamamoto J."/>
            <person name="Saito K."/>
            <person name="Kawai Y."/>
            <person name="Isono Y."/>
            <person name="Nakamura Y."/>
            <person name="Nagahari K."/>
            <person name="Murakami K."/>
            <person name="Yasuda T."/>
            <person name="Iwayanagi T."/>
            <person name="Wagatsuma M."/>
            <person name="Shiratori A."/>
            <person name="Sudo H."/>
            <person name="Hosoiri T."/>
            <person name="Kaku Y."/>
            <person name="Kodaira H."/>
            <person name="Kondo H."/>
            <person name="Sugawara M."/>
            <person name="Takahashi M."/>
            <person name="Kanda K."/>
            <person name="Yokoi T."/>
            <person name="Furuya T."/>
            <person name="Kikkawa E."/>
            <person name="Omura Y."/>
            <person name="Abe K."/>
            <person name="Kamihara K."/>
            <person name="Katsuta N."/>
            <person name="Sato K."/>
            <person name="Tanikawa M."/>
            <person name="Yamazaki M."/>
            <person name="Ninomiya K."/>
            <person name="Ishibashi T."/>
            <person name="Yamashita H."/>
            <person name="Murakawa K."/>
            <person name="Fujimori K."/>
            <person name="Tanai H."/>
            <person name="Kimata M."/>
            <person name="Watanabe M."/>
            <person name="Hiraoka S."/>
            <person name="Chiba Y."/>
            <person name="Ishida S."/>
            <person name="Ono Y."/>
            <person name="Takiguchi S."/>
            <person name="Watanabe S."/>
            <person name="Yosida M."/>
            <person name="Hotuta T."/>
            <person name="Kusano J."/>
            <person name="Kanehori K."/>
            <person name="Takahashi-Fujii A."/>
            <person name="Hara H."/>
            <person name="Tanase T.-O."/>
            <person name="Nomura Y."/>
            <person name="Togiya S."/>
            <person name="Komai F."/>
            <person name="Hara R."/>
            <person name="Takeuchi K."/>
            <person name="Arita M."/>
            <person name="Imose N."/>
            <person name="Musashino K."/>
            <person name="Yuuki H."/>
            <person name="Oshima A."/>
            <person name="Sasaki N."/>
            <person name="Aotsuka S."/>
            <person name="Yoshikawa Y."/>
            <person name="Matsunawa H."/>
            <person name="Ichihara T."/>
            <person name="Shiohata N."/>
            <person name="Sano S."/>
            <person name="Moriya S."/>
            <person name="Momiyama H."/>
            <person name="Satoh N."/>
            <person name="Takami S."/>
            <person name="Terashima Y."/>
            <person name="Suzuki O."/>
            <person name="Nakagawa S."/>
            <person name="Senoh A."/>
            <person name="Mizoguchi H."/>
            <person name="Goto Y."/>
            <person name="Shimizu F."/>
            <person name="Wakebe H."/>
            <person name="Hishigaki H."/>
            <person name="Watanabe T."/>
            <person name="Sugiyama A."/>
            <person name="Takemoto M."/>
            <person name="Kawakami B."/>
            <person name="Yamazaki M."/>
            <person name="Watanabe K."/>
            <person name="Kumagai A."/>
            <person name="Itakura S."/>
            <person name="Fukuzumi Y."/>
            <person name="Fujimori Y."/>
            <person name="Komiyama M."/>
            <person name="Tashiro H."/>
            <person name="Tanigami A."/>
            <person name="Fujiwara T."/>
            <person name="Ono T."/>
            <person name="Yamada K."/>
            <person name="Fujii Y."/>
            <person name="Ozaki K."/>
            <person name="Hirao M."/>
            <person name="Ohmori Y."/>
            <person name="Kawabata A."/>
            <person name="Hikiji T."/>
            <person name="Kobatake N."/>
            <person name="Inagaki H."/>
            <person name="Ikema Y."/>
            <person name="Okamoto S."/>
            <person name="Okitani R."/>
            <person name="Kawakami T."/>
            <person name="Noguchi S."/>
            <person name="Itoh T."/>
            <person name="Shigeta K."/>
            <person name="Senba T."/>
            <person name="Matsumura K."/>
            <person name="Nakajima Y."/>
            <person name="Mizuno T."/>
            <person name="Morinaga M."/>
            <person name="Sasaki M."/>
            <person name="Togashi T."/>
            <person name="Oyama M."/>
            <person name="Hata H."/>
            <person name="Watanabe M."/>
            <person name="Komatsu T."/>
            <person name="Mizushima-Sugano J."/>
            <person name="Satoh T."/>
            <person name="Shirai Y."/>
            <person name="Takahashi Y."/>
            <person name="Nakagawa K."/>
            <person name="Okumura K."/>
            <person name="Nagase T."/>
            <person name="Nomura N."/>
            <person name="Kikuchi H."/>
            <person name="Masuho Y."/>
            <person name="Yamashita R."/>
            <person name="Nakai K."/>
            <person name="Yada T."/>
            <person name="Nakamura Y."/>
            <person name="Ohara O."/>
            <person name="Isogai T."/>
            <person name="Sugano S."/>
        </authorList>
    </citation>
    <scope>NUCLEOTIDE SEQUENCE [LARGE SCALE MRNA] (ISOFORMS 1 AND SV)</scope>
    <source>
        <tissue>Caudate nucleus</tissue>
        <tissue>Heart</tissue>
        <tissue>Subthalamic nucleus</tissue>
    </source>
</reference>
<reference key="8">
    <citation type="submission" date="2003-05" db="EMBL/GenBank/DDBJ databases">
        <title>Cloning of human full-length CDSs in BD Creator(TM) system donor vector.</title>
        <authorList>
            <person name="Kalnine N."/>
            <person name="Chen X."/>
            <person name="Rolfs A."/>
            <person name="Halleck A."/>
            <person name="Hines L."/>
            <person name="Eisenstein S."/>
            <person name="Koundinya M."/>
            <person name="Raphael J."/>
            <person name="Moreira D."/>
            <person name="Kelley T."/>
            <person name="LaBaer J."/>
            <person name="Lin Y."/>
            <person name="Phelan M."/>
            <person name="Farmer A."/>
        </authorList>
    </citation>
    <scope>NUCLEOTIDE SEQUENCE [LARGE SCALE MRNA] (ISOFORM 1)</scope>
</reference>
<reference key="9">
    <citation type="submission" date="2005-09" db="EMBL/GenBank/DDBJ databases">
        <authorList>
            <person name="Mural R.J."/>
            <person name="Istrail S."/>
            <person name="Sutton G.G."/>
            <person name="Florea L."/>
            <person name="Halpern A.L."/>
            <person name="Mobarry C.M."/>
            <person name="Lippert R."/>
            <person name="Walenz B."/>
            <person name="Shatkay H."/>
            <person name="Dew I."/>
            <person name="Miller J.R."/>
            <person name="Flanigan M.J."/>
            <person name="Edwards N.J."/>
            <person name="Bolanos R."/>
            <person name="Fasulo D."/>
            <person name="Halldorsson B.V."/>
            <person name="Hannenhalli S."/>
            <person name="Turner R."/>
            <person name="Yooseph S."/>
            <person name="Lu F."/>
            <person name="Nusskern D.R."/>
            <person name="Shue B.C."/>
            <person name="Zheng X.H."/>
            <person name="Zhong F."/>
            <person name="Delcher A.L."/>
            <person name="Huson D.H."/>
            <person name="Kravitz S.A."/>
            <person name="Mouchard L."/>
            <person name="Reinert K."/>
            <person name="Remington K.A."/>
            <person name="Clark A.G."/>
            <person name="Waterman M.S."/>
            <person name="Eichler E.E."/>
            <person name="Adams M.D."/>
            <person name="Hunkapiller M.W."/>
            <person name="Myers E.W."/>
            <person name="Venter J.C."/>
        </authorList>
    </citation>
    <scope>NUCLEOTIDE SEQUENCE [LARGE SCALE GENOMIC DNA]</scope>
</reference>
<reference key="10">
    <citation type="journal article" date="2004" name="Genome Res.">
        <title>The status, quality, and expansion of the NIH full-length cDNA project: the Mammalian Gene Collection (MGC).</title>
        <authorList>
            <consortium name="The MGC Project Team"/>
        </authorList>
    </citation>
    <scope>NUCLEOTIDE SEQUENCE [LARGE SCALE MRNA] (ISOFORM 1)</scope>
    <source>
        <tissue>Placenta</tissue>
    </source>
</reference>
<reference key="11">
    <citation type="journal article" date="2003" name="Nat. Biotechnol.">
        <title>Exploring proteomes and analyzing protein processing by mass spectrometric identification of sorted N-terminal peptides.</title>
        <authorList>
            <person name="Gevaert K."/>
            <person name="Goethals M."/>
            <person name="Martens L."/>
            <person name="Van Damme J."/>
            <person name="Staes A."/>
            <person name="Thomas G.R."/>
            <person name="Vandekerckhove J."/>
        </authorList>
    </citation>
    <scope>PROTEIN SEQUENCE OF 1-19</scope>
    <source>
        <tissue>Platelet</tissue>
    </source>
</reference>
<reference key="12">
    <citation type="journal article" date="2013" name="MBio">
        <title>ACBD3 interaction with TBC1 domain 22 protein is differentially affected by enteroviral and kobuviral 3A protein binding.</title>
        <authorList>
            <person name="Greninger A.L."/>
            <person name="Knudsen G.M."/>
            <person name="Betegon M."/>
            <person name="Burlingame A.L."/>
            <person name="DeRisi J.L."/>
        </authorList>
    </citation>
    <scope>PROTEIN SEQUENCE OF 1-56; 62-73; 95-118; 131-193 AND 197-255</scope>
    <scope>INTERACTION WITH PI4KB; TBC1D22A AND TBC1D22B</scope>
    <scope>IDENTIFICATION BY MASS SPECTROMETRY</scope>
</reference>
<reference key="13">
    <citation type="submission" date="2005-05" db="UniProtKB">
        <authorList>
            <person name="Bienvenut W.V."/>
        </authorList>
    </citation>
    <scope>PROTEIN SEQUENCE OF 1-19; 30-50 AND 131-170</scope>
    <scope>ACETYLATION AT MET-1</scope>
    <scope>IDENTIFICATION BY MASS SPECTROMETRY</scope>
    <source>
        <tissue>B-cell lymphoma</tissue>
    </source>
</reference>
<reference key="14">
    <citation type="journal article" date="1999" name="Mol. Cell. Biol.">
        <title>Kinase suppressor of Ras forms a multiprotein signaling complex and modulates MEK localization.</title>
        <authorList>
            <person name="Stewart S."/>
            <person name="Sundaram M."/>
            <person name="Zhang Y."/>
            <person name="Lee J."/>
            <person name="Han M."/>
            <person name="Guan K.L."/>
        </authorList>
    </citation>
    <scope>PROTEIN SEQUENCE OF 50-60</scope>
    <scope>INTERACTION WITH KSR1</scope>
</reference>
<reference key="15">
    <citation type="journal article" date="1991" name="Immunology">
        <title>Isolation and partial characterization of the structures of fibroblast activating factor-related proteins from U937 cells.</title>
        <authorList>
            <person name="Demeter J."/>
            <person name="Medzihradszky D."/>
            <person name="Kha H."/>
            <person name="Goetzl E.J."/>
            <person name="Turck C.W."/>
        </authorList>
    </citation>
    <scope>PROTEIN SEQUENCE OF 103-108; 120-123; 131-141 AND 143-153</scope>
    <source>
        <tissue>Histiocytic lymphoma</tissue>
    </source>
</reference>
<reference key="16">
    <citation type="submission" date="2007-03" db="UniProtKB">
        <authorList>
            <person name="Lubec G."/>
            <person name="Afjehi-Sadat L."/>
        </authorList>
    </citation>
    <scope>PROTEIN SEQUENCE OF 131-141 AND 154-190</scope>
    <scope>IDENTIFICATION BY MASS SPECTROMETRY</scope>
    <source>
        <tissue>Brain</tissue>
        <tissue>Cajal-Retzius cell</tissue>
    </source>
</reference>
<reference key="17">
    <citation type="journal article" date="2000" name="J. Virol.">
        <title>Hepatitis C virus core protein interacts with 14-3-3 protein and activates the kinase Raf-1.</title>
        <authorList>
            <person name="Aoki H."/>
            <person name="Hayashi J."/>
            <person name="Moriyama M."/>
            <person name="Arakawa Y."/>
            <person name="Hino O."/>
        </authorList>
    </citation>
    <scope>INTERACTION WITH HCV CORE PROTEIN (MICROBIAL INFECTION)</scope>
</reference>
<reference key="18">
    <citation type="journal article" date="2001" name="Proc. Natl. Acad. Sci. U.S.A.">
        <title>Role of a pineal cAMP-operated arylalkylamine N-acetyltransferase/14-3-3-binding switch in melatonin synthesis.</title>
        <authorList>
            <person name="Ganguly S."/>
            <person name="Gastel J.A."/>
            <person name="Weller J.L."/>
            <person name="Schwartz C."/>
            <person name="Jaffe H."/>
            <person name="Namboodiri M.A."/>
            <person name="Coon S.L."/>
            <person name="Hickman A.B."/>
            <person name="Rollag M."/>
            <person name="Obsil T."/>
            <person name="Beauverger P."/>
            <person name="Ferry G."/>
            <person name="Boutin J.A."/>
            <person name="Klein D.C."/>
        </authorList>
    </citation>
    <scope>INTERACTION WITH AANAT</scope>
</reference>
<reference key="19">
    <citation type="journal article" date="2002" name="J. Biol. Chem.">
        <title>Akt-dependent phosphorylation of p27Kip1 promotes binding to 14-3-3 and cytoplasmic localization.</title>
        <authorList>
            <person name="Fujita N."/>
            <person name="Sato S."/>
            <person name="Katayama K."/>
            <person name="Tsuruo T."/>
        </authorList>
    </citation>
    <scope>INTERACTION WITH CDKN1B</scope>
    <scope>SUBCELLULAR LOCATION</scope>
</reference>
<reference key="20">
    <citation type="journal article" date="2003" name="Mol. Cell. Biol.">
        <title>Regulation of molecular chaperone gene transcription involves the serine phosphorylation, 14-3-3 epsilon binding, and cytoplasmic sequestration of heat shock factor 1.</title>
        <authorList>
            <person name="Wang X."/>
            <person name="Grammatikakis N."/>
            <person name="Siganou A."/>
            <person name="Calderwood S.K."/>
        </authorList>
    </citation>
    <scope>FUNCTION</scope>
    <scope>INTERACTION WITH HSF1</scope>
    <scope>SUBCELLULAR LOCATION</scope>
</reference>
<reference key="21">
    <citation type="journal article" date="2003" name="Nature">
        <title>Proteomic characterization of the human centrosome by protein correlation profiling.</title>
        <authorList>
            <person name="Andersen J.S."/>
            <person name="Wilkinson C.J."/>
            <person name="Mayor T."/>
            <person name="Mortensen P."/>
            <person name="Nigg E.A."/>
            <person name="Mann M."/>
        </authorList>
    </citation>
    <scope>IDENTIFICATION BY MASS SPECTROMETRY</scope>
    <source>
        <tissue>Lymphoblast</tissue>
    </source>
</reference>
<reference key="22">
    <citation type="journal article" date="2005" name="J. Biol. Chem.">
        <title>Phosphorylation of grb10 regulates its interaction with 14-3-3.</title>
        <authorList>
            <person name="Urschel S."/>
            <person name="Bassermann F."/>
            <person name="Bai R.Y."/>
            <person name="Munch S."/>
            <person name="Peschel C."/>
            <person name="Duyster J."/>
        </authorList>
    </citation>
    <scope>INTERACTION WITH GRB10</scope>
</reference>
<reference key="23">
    <citation type="journal article" date="2005" name="Nat. Cell Biol.">
        <title>JNK phosphorylation of 14-3-3 proteins regulates nuclear targeting of c-Abl in the apoptotic response to DNA damage.</title>
        <authorList>
            <person name="Yoshida K."/>
            <person name="Yamaguchi T."/>
            <person name="Natsume T."/>
            <person name="Kufe D."/>
            <person name="Miki Y."/>
        </authorList>
    </citation>
    <scope>INTERACTION WITH ABL1</scope>
    <scope>IDENTIFICATION BY MASS SPECTROMETRY</scope>
</reference>
<reference key="24">
    <citation type="journal article" date="2006" name="FEBS Lett.">
        <title>Protein kinase A phosphorylates and regulates dimerization of 14-3-3 epsilon.</title>
        <authorList>
            <person name="Gu Y.-M."/>
            <person name="Jin Y.-H."/>
            <person name="Choi J.-K."/>
            <person name="Baek K.-H."/>
            <person name="Yeo C.-Y."/>
            <person name="Lee K.-Y."/>
        </authorList>
    </citation>
    <scope>INTERACTION WITH YWHAZ</scope>
</reference>
<reference key="25">
    <citation type="journal article" date="2006" name="J. Proteome Res.">
        <title>Proteomic and bioinformatic characterization of the biogenesis and function of melanosomes.</title>
        <authorList>
            <person name="Chi A."/>
            <person name="Valencia J.C."/>
            <person name="Hu Z.-Z."/>
            <person name="Watabe H."/>
            <person name="Yamaguchi H."/>
            <person name="Mangini N.J."/>
            <person name="Huang H."/>
            <person name="Canfield V.A."/>
            <person name="Cheng K.C."/>
            <person name="Yang F."/>
            <person name="Abe R."/>
            <person name="Yamagishi S."/>
            <person name="Shabanowitz J."/>
            <person name="Hearing V.J."/>
            <person name="Wu C."/>
            <person name="Appella E."/>
            <person name="Hunt D.F."/>
        </authorList>
    </citation>
    <scope>SUBCELLULAR LOCATION [LARGE SCALE ANALYSIS]</scope>
    <source>
        <tissue>Melanoma</tissue>
    </source>
</reference>
<reference key="26">
    <citation type="journal article" date="2008" name="Cell Calcium">
        <title>Inhibitory interaction of the 14-3-3 proteins with ubiquitous (PMCA1) and tissue-specific (PMCA3) isoforms of the plasma membrane Ca2+ pump.</title>
        <authorList>
            <person name="Linde C.I."/>
            <person name="Di Leva F."/>
            <person name="Domi T."/>
            <person name="Tosatto S.C."/>
            <person name="Brini M."/>
            <person name="Carafoli E."/>
        </authorList>
    </citation>
    <scope>INTERACTION WITH ATP2B1 AND ATP2B3</scope>
</reference>
<reference key="27">
    <citation type="journal article" date="2008" name="EMBO J.">
        <title>Phosphorylation-dependent binding of 14-3-3 terminates signalling by the Gab2 docking protein.</title>
        <authorList>
            <person name="Brummer T."/>
            <person name="Larance M."/>
            <person name="Herrera Abreu M.T."/>
            <person name="Lyons R.J."/>
            <person name="Timpson P."/>
            <person name="Emmerich C.H."/>
            <person name="Fleuren E.D.G."/>
            <person name="Lehrbach G.M."/>
            <person name="Schramek D."/>
            <person name="Guilhaus M."/>
            <person name="James D.E."/>
            <person name="Daly R.J."/>
        </authorList>
    </citation>
    <scope>INTERACTION WITH GAB2</scope>
</reference>
<reference key="28">
    <citation type="journal article" date="2008" name="Proteomics">
        <title>Large-scale phosphoproteome analysis of human liver tissue by enrichment and fractionation of phosphopeptides with strong anion exchange chromatography.</title>
        <authorList>
            <person name="Han G."/>
            <person name="Ye M."/>
            <person name="Zhou H."/>
            <person name="Jiang X."/>
            <person name="Feng S."/>
            <person name="Jiang X."/>
            <person name="Tian R."/>
            <person name="Wan D."/>
            <person name="Zou H."/>
            <person name="Gu J."/>
        </authorList>
    </citation>
    <scope>IDENTIFICATION BY MASS SPECTROMETRY [LARGE SCALE ANALYSIS]</scope>
    <source>
        <tissue>Liver</tissue>
    </source>
</reference>
<reference key="29">
    <citation type="journal article" date="2009" name="Anal. Chem.">
        <title>Lys-N and trypsin cover complementary parts of the phosphoproteome in a refined SCX-based approach.</title>
        <authorList>
            <person name="Gauci S."/>
            <person name="Helbig A.O."/>
            <person name="Slijper M."/>
            <person name="Krijgsveld J."/>
            <person name="Heck A.J."/>
            <person name="Mohammed S."/>
        </authorList>
    </citation>
    <scope>ACETYLATION [LARGE SCALE ANALYSIS] AT MET-1</scope>
    <scope>IDENTIFICATION BY MASS SPECTROMETRY [LARGE SCALE ANALYSIS]</scope>
</reference>
<reference key="30">
    <citation type="journal article" date="2009" name="Biol. Psychiatry">
        <title>SLITRK1 binds 14-3-3 and regulates neurite outgrowth in a phosphorylation-dependent manner.</title>
        <authorList>
            <person name="Kajiwara Y."/>
            <person name="Buxbaum J.D."/>
            <person name="Grice D.E."/>
        </authorList>
    </citation>
    <scope>INTERACTION WITH SLITRK1</scope>
</reference>
<reference key="31">
    <citation type="journal article" date="2009" name="J. Biol. Chem.">
        <title>Interaction of Akt-phosphorylated SRPK2 with 14-3-3 mediates cell cycle and cell death in neurons.</title>
        <authorList>
            <person name="Jang S.W."/>
            <person name="Liu X."/>
            <person name="Fu H."/>
            <person name="Rees H."/>
            <person name="Yepes M."/>
            <person name="Levey A."/>
            <person name="Ye K."/>
        </authorList>
    </citation>
    <scope>INTERACTION WITH SRPK2</scope>
</reference>
<reference key="32">
    <citation type="journal article" date="2009" name="Science">
        <title>Lysine acetylation targets protein complexes and co-regulates major cellular functions.</title>
        <authorList>
            <person name="Choudhary C."/>
            <person name="Kumar C."/>
            <person name="Gnad F."/>
            <person name="Nielsen M.L."/>
            <person name="Rehman M."/>
            <person name="Walther T.C."/>
            <person name="Olsen J.V."/>
            <person name="Mann M."/>
        </authorList>
    </citation>
    <scope>ACETYLATION [LARGE SCALE ANALYSIS] AT LYS-50; LYS-69; LYS-118 AND LYS-123</scope>
    <scope>IDENTIFICATION BY MASS SPECTROMETRY [LARGE SCALE ANALYSIS]</scope>
</reference>
<reference key="33">
    <citation type="journal article" date="2010" name="Sci. Signal.">
        <title>Quantitative phosphoproteomics reveals widespread full phosphorylation site occupancy during mitosis.</title>
        <authorList>
            <person name="Olsen J.V."/>
            <person name="Vermeulen M."/>
            <person name="Santamaria A."/>
            <person name="Kumar C."/>
            <person name="Miller M.L."/>
            <person name="Jensen L.J."/>
            <person name="Gnad F."/>
            <person name="Cox J."/>
            <person name="Jensen T.S."/>
            <person name="Nigg E.A."/>
            <person name="Brunak S."/>
            <person name="Mann M."/>
        </authorList>
    </citation>
    <scope>PHOSPHORYLATION [LARGE SCALE ANALYSIS] AT SER-210</scope>
    <scope>IDENTIFICATION BY MASS SPECTROMETRY [LARGE SCALE ANALYSIS]</scope>
    <source>
        <tissue>Cervix carcinoma</tissue>
    </source>
</reference>
<reference key="34">
    <citation type="journal article" date="2011" name="BMC Syst. Biol.">
        <title>Initial characterization of the human central proteome.</title>
        <authorList>
            <person name="Burkard T.R."/>
            <person name="Planyavsky M."/>
            <person name="Kaupe I."/>
            <person name="Breitwieser F.P."/>
            <person name="Buerckstuemmer T."/>
            <person name="Bennett K.L."/>
            <person name="Superti-Furga G."/>
            <person name="Colinge J."/>
        </authorList>
    </citation>
    <scope>IDENTIFICATION BY MASS SPECTROMETRY [LARGE SCALE ANALYSIS]</scope>
</reference>
<reference key="35">
    <citation type="journal article" date="2011" name="J. Biol. Chem.">
        <title>Phosphorylation-dependent C-terminal binding of 14-3-3 proteins promotes cell surface expression of HIV co-receptor GPR15.</title>
        <authorList>
            <person name="Okamoto Y."/>
            <person name="Shikano S."/>
        </authorList>
    </citation>
    <scope>SUBCELLULAR LOCATION</scope>
    <scope>INTERACTION WITH GPR15</scope>
    <scope>FUNCTION</scope>
</reference>
<reference key="36">
    <citation type="journal article" date="2011" name="Sci. Signal.">
        <title>System-wide temporal characterization of the proteome and phosphoproteome of human embryonic stem cell differentiation.</title>
        <authorList>
            <person name="Rigbolt K.T."/>
            <person name="Prokhorova T.A."/>
            <person name="Akimov V."/>
            <person name="Henningsen J."/>
            <person name="Johansen P.T."/>
            <person name="Kratchmarova I."/>
            <person name="Kassem M."/>
            <person name="Mann M."/>
            <person name="Olsen J.V."/>
            <person name="Blagoev B."/>
        </authorList>
    </citation>
    <scope>PHOSPHORYLATION [LARGE SCALE ANALYSIS] AT SER-210</scope>
    <scope>IDENTIFICATION BY MASS SPECTROMETRY [LARGE SCALE ANALYSIS]</scope>
</reference>
<reference key="37">
    <citation type="journal article" date="2012" name="Cell Host Microbe">
        <title>The mitochondrial targeting chaperone 14-3-3epsilon regulates a RIG-I translocon that mediates membrane association and innate antiviral immunity.</title>
        <authorList>
            <person name="Liu H.M."/>
            <person name="Loo Y.M."/>
            <person name="Horner S.M."/>
            <person name="Zornetzer G.A."/>
            <person name="Katze M.G."/>
            <person name="Gale M. Jr."/>
        </authorList>
    </citation>
    <scope>FUNCTION</scope>
    <scope>INTERACTION WITH RIGI AND TRIM25</scope>
</reference>
<reference key="38">
    <citation type="journal article" date="2013" name="J. Proteome Res.">
        <title>Toward a comprehensive characterization of a human cancer cell phosphoproteome.</title>
        <authorList>
            <person name="Zhou H."/>
            <person name="Di Palma S."/>
            <person name="Preisinger C."/>
            <person name="Peng M."/>
            <person name="Polat A.N."/>
            <person name="Heck A.J."/>
            <person name="Mohammed S."/>
        </authorList>
    </citation>
    <scope>PHOSPHORYLATION [LARGE SCALE ANALYSIS] AT SER-210</scope>
    <scope>IDENTIFICATION BY MASS SPECTROMETRY [LARGE SCALE ANALYSIS]</scope>
    <source>
        <tissue>Erythroleukemia</tissue>
    </source>
</reference>
<reference key="39">
    <citation type="journal article" date="2014" name="J. Proteomics">
        <title>An enzyme assisted RP-RPLC approach for in-depth analysis of human liver phosphoproteome.</title>
        <authorList>
            <person name="Bian Y."/>
            <person name="Song C."/>
            <person name="Cheng K."/>
            <person name="Dong M."/>
            <person name="Wang F."/>
            <person name="Huang J."/>
            <person name="Sun D."/>
            <person name="Wang L."/>
            <person name="Ye M."/>
            <person name="Zou H."/>
        </authorList>
    </citation>
    <scope>PHOSPHORYLATION [LARGE SCALE ANALYSIS] AT THR-232</scope>
    <scope>IDENTIFICATION BY MASS SPECTROMETRY [LARGE SCALE ANALYSIS]</scope>
    <source>
        <tissue>Liver</tissue>
    </source>
</reference>
<reference key="40">
    <citation type="journal article" date="2015" name="Biochem. Biophys. Res. Commun.">
        <title>Suppression of death-associated protein kinase 2 by interaction with 14-3-3 proteins.</title>
        <authorList>
            <person name="Yuasa K."/>
            <person name="Ota R."/>
            <person name="Matsuda S."/>
            <person name="Isshiki K."/>
            <person name="Inoue M."/>
            <person name="Tsuji A."/>
        </authorList>
    </citation>
    <scope>INTERACTION WITH DAPK2</scope>
</reference>
<reference key="41">
    <citation type="journal article" date="2015" name="J. Biol. Chem.">
        <title>Phosphorylation-dependent regulation of Connecdenn/DENND1 guanine nucleotide exchange factors.</title>
        <authorList>
            <person name="Kulasekaran G."/>
            <person name="Nossova N."/>
            <person name="Marat A.L."/>
            <person name="Lund I."/>
            <person name="Cremer C."/>
            <person name="Ioannou M.S."/>
            <person name="McPherson P.S."/>
        </authorList>
    </citation>
    <scope>INTERACTION WITH DENND1A</scope>
</reference>
<reference key="42">
    <citation type="journal article" date="2015" name="J. Cell Sci.">
        <title>Front-signal-dependent accumulation of the RHOA inhibitor FAM65B at leading edges polarizes neutrophils.</title>
        <authorList>
            <person name="Gao K."/>
            <person name="Tang W."/>
            <person name="Li Y."/>
            <person name="Zhang P."/>
            <person name="Wang D."/>
            <person name="Yu L."/>
            <person name="Wang C."/>
            <person name="Wu D."/>
        </authorList>
    </citation>
    <scope>INTERACTION WITH RIPOR2</scope>
</reference>
<reference key="43">
    <citation type="journal article" date="2015" name="Proteomics">
        <title>N-terminome analysis of the human mitochondrial proteome.</title>
        <authorList>
            <person name="Vaca Jacome A.S."/>
            <person name="Rabilloud T."/>
            <person name="Schaeffer-Reiss C."/>
            <person name="Rompais M."/>
            <person name="Ayoub D."/>
            <person name="Lane L."/>
            <person name="Bairoch A."/>
            <person name="Van Dorsselaer A."/>
            <person name="Carapito C."/>
        </authorList>
    </citation>
    <scope>IDENTIFICATION BY MASS SPECTROMETRY [LARGE SCALE ANALYSIS]</scope>
</reference>
<reference key="44">
    <citation type="journal article" date="2016" name="Sci. Transl. Med.">
        <title>Familial autoinflammation with neutrophilic dermatosis reveals a regulatory mechanism of pyrin activation.</title>
        <authorList>
            <person name="Masters S.L."/>
            <person name="Lagou V."/>
            <person name="Jeru I."/>
            <person name="Baker P.J."/>
            <person name="Van Eyck L."/>
            <person name="Parry D.A."/>
            <person name="Lawless D."/>
            <person name="De Nardo D."/>
            <person name="Garcia-Perez J.E."/>
            <person name="Dagley L.F."/>
            <person name="Holley C.L."/>
            <person name="Dooley J."/>
            <person name="Moghaddas F."/>
            <person name="Pasciuto E."/>
            <person name="Jeandel P.Y."/>
            <person name="Sciot R."/>
            <person name="Lyras D."/>
            <person name="Webb A.I."/>
            <person name="Nicholson S.E."/>
            <person name="De Somer L."/>
            <person name="van Nieuwenhove E."/>
            <person name="Ruuth-Praz J."/>
            <person name="Copin B."/>
            <person name="Cochet E."/>
            <person name="Medlej-Hashim M."/>
            <person name="Megarbane A."/>
            <person name="Schroder K."/>
            <person name="Savic S."/>
            <person name="Goris A."/>
            <person name="Amselem S."/>
            <person name="Wouters C."/>
            <person name="Liston A."/>
        </authorList>
    </citation>
    <scope>INTERACTION WITH MEFV</scope>
</reference>
<reference key="45">
    <citation type="journal article" date="2017" name="Nat. Struct. Mol. Biol.">
        <title>Site-specific mapping of the human SUMO proteome reveals co-modification with phosphorylation.</title>
        <authorList>
            <person name="Hendriks I.A."/>
            <person name="Lyon D."/>
            <person name="Young C."/>
            <person name="Jensen L.J."/>
            <person name="Vertegaal A.C."/>
            <person name="Nielsen M.L."/>
        </authorList>
    </citation>
    <scope>SUMOYLATION [LARGE SCALE ANALYSIS] AT LYS-50</scope>
    <scope>IDENTIFICATION BY MASS SPECTROMETRY [LARGE SCALE ANALYSIS]</scope>
</reference>
<reference key="46">
    <citation type="journal article" date="2018" name="IScience">
        <title>Mitogenic Signals Stimulate the CREB Coactivator CRTC3 through PP2A Recruitment.</title>
        <authorList>
            <person name="Sonntag T."/>
            <person name="Ostojic J."/>
            <person name="Vaughan J.M."/>
            <person name="Moresco J.J."/>
            <person name="Yoon Y.S."/>
            <person name="Yates J.R. III"/>
            <person name="Montminy M."/>
        </authorList>
    </citation>
    <scope>INTERACTION WITH CRTC1; CRTC2 AND CRTC3</scope>
</reference>
<reference key="47">
    <citation type="journal article" date="2018" name="Nature">
        <title>KLHL22 activates amino-acid-dependent mTORC1 signalling to promote tumorigenesis and ageing.</title>
        <authorList>
            <person name="Chen J."/>
            <person name="Ou Y."/>
            <person name="Yang Y."/>
            <person name="Li W."/>
            <person name="Xu Y."/>
            <person name="Xie Y."/>
            <person name="Liu Y."/>
        </authorList>
    </citation>
    <scope>INTERACTION WITH KLHL22</scope>
</reference>
<reference key="48">
    <citation type="journal article" date="2022" name="Adv. Sci.">
        <title>RNF115 Inhibits the Post-ER Trafficking of TLRs and TLRs-Mediated Immune Responses by Catalyzing K11-Linked Ubiquitination of RAB1A and RAB13.</title>
        <authorList>
            <person name="Zhang Z.D."/>
            <person name="Li H.X."/>
            <person name="Gan H."/>
            <person name="Tang Z."/>
            <person name="Guo Y.Y."/>
            <person name="Yao S.Q."/>
            <person name="Liuyu T."/>
            <person name="Zhong B."/>
            <person name="Lin D."/>
        </authorList>
    </citation>
    <scope>FUNCTION</scope>
    <scope>INTERACTION WITH RNF115</scope>
</reference>
<reference key="49">
    <citation type="journal article" date="2023" name="J. Virol.">
        <title>Cleavage of 14-3-3epsilon by the enteroviral 3C protease dampens RIG-I-mediated antiviral signaling.</title>
        <authorList>
            <person name="Andrews D.D.T."/>
            <person name="Vlok M."/>
            <person name="Akbari Bani D."/>
            <person name="Hay B.N."/>
            <person name="Mohamud Y."/>
            <person name="Foster L.J."/>
            <person name="Luo H."/>
            <person name="Overall C.M."/>
            <person name="Jan E."/>
        </authorList>
    </citation>
    <scope>FUNCTION</scope>
    <scope>CLEAVAGE BY POLIOVIRUS PROTEASE 3C (MICROBIAL INFECTION)</scope>
    <scope>INTERACTION WITH RIGI</scope>
    <scope>MUTAGENESIS OF GLN-236</scope>
</reference>
<reference key="50">
    <citation type="journal article" date="2023" name="Cancer Biol. Ther.">
        <title>Nucleo-cytoplasmic shuttling of 14-3-3 epsilon carrying hnRNP C promotes autophagy.</title>
        <authorList>
            <person name="Guo M."/>
            <person name="He M."/>
            <person name="Zhang Y."/>
            <person name="Liu W."/>
            <person name="Qi M."/>
            <person name="Liu Z."/>
            <person name="Yi G."/>
            <person name="Deng S."/>
            <person name="Li Y."/>
            <person name="Sun X."/>
            <person name="Zhao L."/>
            <person name="Chen T."/>
            <person name="Liu Y."/>
        </authorList>
    </citation>
    <scope>FUNCTION</scope>
    <scope>INTERACTION WITH HNRNPC</scope>
    <scope>SUBCELLULAR LOCATION</scope>
</reference>
<reference key="51">
    <citation type="journal article" date="2006" name="Proc. Natl. Acad. Sci. U.S.A.">
        <title>Structural basis for protein-protein interactions in the 14-3-3 protein family.</title>
        <authorList>
            <person name="Yang X."/>
            <person name="Lee W.H."/>
            <person name="Sobott F."/>
            <person name="Papagrigoriou E."/>
            <person name="Robinson C.V."/>
            <person name="Grossmann J.G."/>
            <person name="Sundstroem M."/>
            <person name="Doyle D.A."/>
            <person name="Elkins J.M."/>
        </authorList>
    </citation>
    <scope>X-RAY CRYSTALLOGRAPHY (1.75 ANGSTROMS) OF 1-233</scope>
    <scope>IDENTIFICATION BY MASS SPECTROMETRY</scope>
    <scope>INTERACTION WITH PHOSPHOSERINE MOTIFS</scope>
    <scope>SUBUNIT</scope>
</reference>
<name>1433E_HUMAN</name>
<dbReference type="EMBL" id="U20972">
    <property type="protein sequence ID" value="AAC50175.1"/>
    <property type="molecule type" value="mRNA"/>
</dbReference>
<dbReference type="EMBL" id="U54778">
    <property type="protein sequence ID" value="AAC50710.1"/>
    <property type="molecule type" value="mRNA"/>
</dbReference>
<dbReference type="EMBL" id="U43399">
    <property type="protein sequence ID" value="AAC50625.1"/>
    <property type="molecule type" value="mRNA"/>
</dbReference>
<dbReference type="EMBL" id="U43430">
    <property type="protein sequence ID" value="AAD00026.1"/>
    <property type="molecule type" value="mRNA"/>
</dbReference>
<dbReference type="EMBL" id="U28936">
    <property type="protein sequence ID" value="AAA75301.1"/>
    <property type="molecule type" value="mRNA"/>
</dbReference>
<dbReference type="EMBL" id="AB017103">
    <property type="protein sequence ID" value="BAA32538.1"/>
    <property type="molecule type" value="Genomic_DNA"/>
</dbReference>
<dbReference type="EMBL" id="AY883089">
    <property type="protein sequence ID" value="AAX68683.1"/>
    <property type="molecule type" value="mRNA"/>
</dbReference>
<dbReference type="EMBL" id="AK128785">
    <property type="protein sequence ID" value="BAG54733.1"/>
    <property type="molecule type" value="mRNA"/>
</dbReference>
<dbReference type="EMBL" id="AK295260">
    <property type="protein sequence ID" value="BAG58249.1"/>
    <property type="molecule type" value="mRNA"/>
</dbReference>
<dbReference type="EMBL" id="AK316185">
    <property type="protein sequence ID" value="BAH14556.1"/>
    <property type="molecule type" value="mRNA"/>
</dbReference>
<dbReference type="EMBL" id="BT007161">
    <property type="protein sequence ID" value="AAP35825.1"/>
    <property type="molecule type" value="mRNA"/>
</dbReference>
<dbReference type="EMBL" id="CH471108">
    <property type="protein sequence ID" value="EAW90628.1"/>
    <property type="molecule type" value="Genomic_DNA"/>
</dbReference>
<dbReference type="EMBL" id="CH471108">
    <property type="protein sequence ID" value="EAW90629.1"/>
    <property type="molecule type" value="Genomic_DNA"/>
</dbReference>
<dbReference type="EMBL" id="BC000179">
    <property type="protein sequence ID" value="AAH00179.1"/>
    <property type="molecule type" value="mRNA"/>
</dbReference>
<dbReference type="EMBL" id="BC001440">
    <property type="protein sequence ID" value="AAH01440.1"/>
    <property type="molecule type" value="mRNA"/>
</dbReference>
<dbReference type="CCDS" id="CCDS11001.1">
    <molecule id="P62258-1"/>
</dbReference>
<dbReference type="PIR" id="A61235">
    <property type="entry name" value="A61235"/>
</dbReference>
<dbReference type="PIR" id="I38947">
    <property type="entry name" value="I38947"/>
</dbReference>
<dbReference type="RefSeq" id="NP_006752.1">
    <molecule id="P62258-1"/>
    <property type="nucleotide sequence ID" value="NM_006761.5"/>
</dbReference>
<dbReference type="PDB" id="2BR9">
    <property type="method" value="X-ray"/>
    <property type="resolution" value="1.75 A"/>
    <property type="chains" value="A=1-233"/>
</dbReference>
<dbReference type="PDB" id="3UAL">
    <property type="method" value="X-ray"/>
    <property type="resolution" value="1.80 A"/>
    <property type="chains" value="A=1-232"/>
</dbReference>
<dbReference type="PDB" id="3UBW">
    <property type="method" value="X-ray"/>
    <property type="resolution" value="1.90 A"/>
    <property type="chains" value="A=1-234"/>
</dbReference>
<dbReference type="PDB" id="6EIH">
    <property type="method" value="X-ray"/>
    <property type="resolution" value="2.70 A"/>
    <property type="chains" value="A=3-232"/>
</dbReference>
<dbReference type="PDB" id="7C8E">
    <property type="method" value="X-ray"/>
    <property type="resolution" value="3.16 A"/>
    <property type="chains" value="A/B=1-232"/>
</dbReference>
<dbReference type="PDB" id="7V9B">
    <property type="method" value="X-ray"/>
    <property type="resolution" value="1.85 A"/>
    <property type="chains" value="A=1-232"/>
</dbReference>
<dbReference type="PDB" id="8DGM">
    <property type="method" value="X-ray"/>
    <property type="resolution" value="3.20 A"/>
    <property type="chains" value="A=1-255"/>
</dbReference>
<dbReference type="PDB" id="8DGN">
    <property type="method" value="X-ray"/>
    <property type="resolution" value="3.16 A"/>
    <property type="chains" value="A=1-255"/>
</dbReference>
<dbReference type="PDB" id="8DGP">
    <property type="method" value="X-ray"/>
    <property type="resolution" value="2.70 A"/>
    <property type="chains" value="A/B/C/D=1-255"/>
</dbReference>
<dbReference type="PDB" id="8DP5">
    <property type="method" value="EM"/>
    <property type="resolution" value="3.10 A"/>
    <property type="chains" value="D=1-255"/>
</dbReference>
<dbReference type="PDB" id="8Q1S">
    <property type="method" value="X-ray"/>
    <property type="resolution" value="3.23 A"/>
    <property type="chains" value="A/B=1-255"/>
</dbReference>
<dbReference type="PDBsum" id="2BR9"/>
<dbReference type="PDBsum" id="3UAL"/>
<dbReference type="PDBsum" id="3UBW"/>
<dbReference type="PDBsum" id="6EIH"/>
<dbReference type="PDBsum" id="7C8E"/>
<dbReference type="PDBsum" id="7V9B"/>
<dbReference type="PDBsum" id="8DGM"/>
<dbReference type="PDBsum" id="8DGN"/>
<dbReference type="PDBsum" id="8DGP"/>
<dbReference type="PDBsum" id="8DP5"/>
<dbReference type="PDBsum" id="8Q1S"/>
<dbReference type="EMDB" id="EMD-27630"/>
<dbReference type="SMR" id="P62258"/>
<dbReference type="BioGRID" id="113363">
    <property type="interactions" value="1194"/>
</dbReference>
<dbReference type="CORUM" id="P62258"/>
<dbReference type="DIP" id="DIP-36676N"/>
<dbReference type="ELM" id="P62258"/>
<dbReference type="FunCoup" id="P62258">
    <property type="interactions" value="4205"/>
</dbReference>
<dbReference type="IntAct" id="P62258">
    <property type="interactions" value="876"/>
</dbReference>
<dbReference type="MINT" id="P62258"/>
<dbReference type="STRING" id="9606.ENSP00000264335"/>
<dbReference type="ChEMBL" id="CHEMBL3329082"/>
<dbReference type="DrugBank" id="DB01780">
    <property type="generic name" value="Fusicoccin"/>
</dbReference>
<dbReference type="DrugBank" id="DB12695">
    <property type="generic name" value="Phenethyl Isothiocyanate"/>
</dbReference>
<dbReference type="MoonDB" id="P62258">
    <property type="type" value="Predicted"/>
</dbReference>
<dbReference type="TCDB" id="8.A.98.1.10">
    <property type="family name" value="the 14-3-3 protein (14-3-3) family"/>
</dbReference>
<dbReference type="GlyGen" id="P62258">
    <property type="glycosylation" value="2 sites, 15 N-linked glycans (1 site), 1 O-linked glycan (1 site)"/>
</dbReference>
<dbReference type="iPTMnet" id="P62258"/>
<dbReference type="MetOSite" id="P62258"/>
<dbReference type="PhosphoSitePlus" id="P62258"/>
<dbReference type="SwissPalm" id="P62258"/>
<dbReference type="BioMuta" id="YWHAE"/>
<dbReference type="DMDM" id="51702210"/>
<dbReference type="OGP" id="P42655"/>
<dbReference type="jPOST" id="P62258"/>
<dbReference type="MassIVE" id="P62258"/>
<dbReference type="PaxDb" id="9606-ENSP00000264335"/>
<dbReference type="PeptideAtlas" id="P62258"/>
<dbReference type="PRIDE" id="P62258"/>
<dbReference type="ProteomicsDB" id="57377"/>
<dbReference type="ProteomicsDB" id="57378">
    <molecule id="P62258-2"/>
</dbReference>
<dbReference type="Pumba" id="P62258"/>
<dbReference type="TopDownProteomics" id="P62258-1">
    <molecule id="P62258-1"/>
</dbReference>
<dbReference type="Antibodypedia" id="1898">
    <property type="antibodies" value="518 antibodies from 40 providers"/>
</dbReference>
<dbReference type="CPTC" id="P62258">
    <property type="antibodies" value="3 antibodies"/>
</dbReference>
<dbReference type="DNASU" id="7531"/>
<dbReference type="Ensembl" id="ENST00000264335.13">
    <molecule id="P62258-1"/>
    <property type="protein sequence ID" value="ENSP00000264335.8"/>
    <property type="gene ID" value="ENSG00000108953.17"/>
</dbReference>
<dbReference type="Ensembl" id="ENST00000571732.5">
    <molecule id="P62258-2"/>
    <property type="protein sequence ID" value="ENSP00000461762.1"/>
    <property type="gene ID" value="ENSG00000108953.17"/>
</dbReference>
<dbReference type="Ensembl" id="ENST00000616643.3">
    <molecule id="P62258-2"/>
    <property type="protein sequence ID" value="ENSP00000481059.2"/>
    <property type="gene ID" value="ENSG00000274474.3"/>
</dbReference>
<dbReference type="Ensembl" id="ENST00000627231.2">
    <molecule id="P62258-1"/>
    <property type="protein sequence ID" value="ENSP00000487356.1"/>
    <property type="gene ID" value="ENSG00000274474.3"/>
</dbReference>
<dbReference type="GeneID" id="7531"/>
<dbReference type="KEGG" id="hsa:7531"/>
<dbReference type="MANE-Select" id="ENST00000264335.13">
    <property type="protein sequence ID" value="ENSP00000264335.8"/>
    <property type="RefSeq nucleotide sequence ID" value="NM_006761.5"/>
    <property type="RefSeq protein sequence ID" value="NP_006752.1"/>
</dbReference>
<dbReference type="UCSC" id="uc002fsk.4">
    <molecule id="P62258-1"/>
    <property type="organism name" value="human"/>
</dbReference>
<dbReference type="AGR" id="HGNC:12851"/>
<dbReference type="CTD" id="7531"/>
<dbReference type="DisGeNET" id="7531"/>
<dbReference type="GeneCards" id="YWHAE"/>
<dbReference type="HGNC" id="HGNC:12851">
    <property type="gene designation" value="YWHAE"/>
</dbReference>
<dbReference type="HPA" id="ENSG00000108953">
    <property type="expression patterns" value="Low tissue specificity"/>
</dbReference>
<dbReference type="MalaCards" id="YWHAE"/>
<dbReference type="MIM" id="605066">
    <property type="type" value="gene"/>
</dbReference>
<dbReference type="neXtProt" id="NX_P62258"/>
<dbReference type="OpenTargets" id="ENSG00000108953"/>
<dbReference type="Orphanet" id="217385">
    <property type="disease" value="17p13.3 microduplication syndrome"/>
</dbReference>
<dbReference type="Orphanet" id="457246">
    <property type="disease" value="Clear cell sarcoma of kidney"/>
</dbReference>
<dbReference type="Orphanet" id="261257">
    <property type="disease" value="Distal 17p13.3 microdeletion syndrome"/>
</dbReference>
<dbReference type="Orphanet" id="213711">
    <property type="disease" value="Endometrial stromal sarcoma"/>
</dbReference>
<dbReference type="Orphanet" id="531">
    <property type="disease" value="Miller-Dieker syndrome"/>
</dbReference>
<dbReference type="PharmGKB" id="PA37440"/>
<dbReference type="VEuPathDB" id="HostDB:ENSG00000108953"/>
<dbReference type="eggNOG" id="KOG0841">
    <property type="taxonomic scope" value="Eukaryota"/>
</dbReference>
<dbReference type="GeneTree" id="ENSGT01110000267238"/>
<dbReference type="HOGENOM" id="CLU_058290_0_0_1"/>
<dbReference type="InParanoid" id="P62258"/>
<dbReference type="OMA" id="SKGTDKH"/>
<dbReference type="OrthoDB" id="10260625at2759"/>
<dbReference type="PAN-GO" id="P62258">
    <property type="GO annotations" value="5 GO annotations based on evolutionary models"/>
</dbReference>
<dbReference type="PhylomeDB" id="P62258"/>
<dbReference type="TreeFam" id="TF102003"/>
<dbReference type="PathwayCommons" id="P62258"/>
<dbReference type="Reactome" id="R-HSA-111447">
    <property type="pathway name" value="Activation of BAD and translocation to mitochondria"/>
</dbReference>
<dbReference type="Reactome" id="R-HSA-1445148">
    <property type="pathway name" value="Translocation of SLC2A4 (GLUT4) to the plasma membrane"/>
</dbReference>
<dbReference type="Reactome" id="R-HSA-2028269">
    <property type="pathway name" value="Signaling by Hippo"/>
</dbReference>
<dbReference type="Reactome" id="R-HSA-205025">
    <property type="pathway name" value="NADE modulates death signalling"/>
</dbReference>
<dbReference type="Reactome" id="R-HSA-2565942">
    <property type="pathway name" value="Regulation of PLK1 Activity at G2/M Transition"/>
</dbReference>
<dbReference type="Reactome" id="R-HSA-3371453">
    <property type="pathway name" value="Regulation of HSF1-mediated heat shock response"/>
</dbReference>
<dbReference type="Reactome" id="R-HSA-3371511">
    <property type="pathway name" value="HSF1 activation"/>
</dbReference>
<dbReference type="Reactome" id="R-HSA-380259">
    <property type="pathway name" value="Loss of Nlp from mitotic centrosomes"/>
</dbReference>
<dbReference type="Reactome" id="R-HSA-380270">
    <property type="pathway name" value="Recruitment of mitotic centrosome proteins and complexes"/>
</dbReference>
<dbReference type="Reactome" id="R-HSA-380284">
    <property type="pathway name" value="Loss of proteins required for interphase microtubule organization from the centrosome"/>
</dbReference>
<dbReference type="Reactome" id="R-HSA-380320">
    <property type="pathway name" value="Recruitment of NuMA to mitotic centrosomes"/>
</dbReference>
<dbReference type="Reactome" id="R-HSA-5620912">
    <property type="pathway name" value="Anchoring of the basal body to the plasma membrane"/>
</dbReference>
<dbReference type="Reactome" id="R-HSA-5625740">
    <property type="pathway name" value="RHO GTPases activate PKNs"/>
</dbReference>
<dbReference type="Reactome" id="R-HSA-5628897">
    <property type="pathway name" value="TP53 Regulates Metabolic Genes"/>
</dbReference>
<dbReference type="Reactome" id="R-HSA-75035">
    <property type="pathway name" value="Chk1/Chk2(Cds1) mediated inactivation of Cyclin B:Cdk1 complex"/>
</dbReference>
<dbReference type="Reactome" id="R-HSA-8854518">
    <property type="pathway name" value="AURKA Activation by TPX2"/>
</dbReference>
<dbReference type="Reactome" id="R-HSA-8862803">
    <property type="pathway name" value="Deregulated CDK5 triggers multiple neurodegenerative pathways in Alzheimer's disease models"/>
</dbReference>
<dbReference type="Reactome" id="R-HSA-8876198">
    <property type="pathway name" value="RAB GEFs exchange GTP for GDP on RABs"/>
</dbReference>
<dbReference type="Reactome" id="R-HSA-9735871">
    <property type="pathway name" value="SARS-CoV-1 targets host intracellular signalling and regulatory pathways"/>
</dbReference>
<dbReference type="Reactome" id="R-HSA-9755779">
    <property type="pathway name" value="SARS-CoV-2 targets host intracellular signalling and regulatory pathways"/>
</dbReference>
<dbReference type="Reactome" id="R-HSA-9856649">
    <property type="pathway name" value="Transcriptional and post-translational regulation of MITF-M expression and activity"/>
</dbReference>
<dbReference type="SignaLink" id="P62258"/>
<dbReference type="SIGNOR" id="P62258"/>
<dbReference type="BioGRID-ORCS" id="7531">
    <property type="hits" value="212 hits in 1128 CRISPR screens"/>
</dbReference>
<dbReference type="CD-CODE" id="8C2F96ED">
    <property type="entry name" value="Centrosome"/>
</dbReference>
<dbReference type="CD-CODE" id="91857CE7">
    <property type="entry name" value="Nucleolus"/>
</dbReference>
<dbReference type="CD-CODE" id="FB4E32DD">
    <property type="entry name" value="Presynaptic clusters and postsynaptic densities"/>
</dbReference>
<dbReference type="ChiTaRS" id="YWHAE">
    <property type="organism name" value="human"/>
</dbReference>
<dbReference type="EvolutionaryTrace" id="P62258"/>
<dbReference type="GeneWiki" id="YWHAE"/>
<dbReference type="GenomeRNAi" id="7531"/>
<dbReference type="Pharos" id="P62258">
    <property type="development level" value="Tbio"/>
</dbReference>
<dbReference type="PRO" id="PR:P62258"/>
<dbReference type="Proteomes" id="UP000005640">
    <property type="component" value="Chromosome 17"/>
</dbReference>
<dbReference type="RNAct" id="P62258">
    <property type="molecule type" value="protein"/>
</dbReference>
<dbReference type="Bgee" id="ENSG00000108953">
    <property type="expression patterns" value="Expressed in superior frontal gyrus and 116 other cell types or tissues"/>
</dbReference>
<dbReference type="ExpressionAtlas" id="P62258">
    <property type="expression patterns" value="baseline and differential"/>
</dbReference>
<dbReference type="GO" id="GO:0005737">
    <property type="term" value="C:cytoplasm"/>
    <property type="evidence" value="ECO:0000314"/>
    <property type="project" value="UniProtKB"/>
</dbReference>
<dbReference type="GO" id="GO:0005829">
    <property type="term" value="C:cytosol"/>
    <property type="evidence" value="ECO:0000314"/>
    <property type="project" value="HPA"/>
</dbReference>
<dbReference type="GO" id="GO:0005783">
    <property type="term" value="C:endoplasmic reticulum"/>
    <property type="evidence" value="ECO:0000314"/>
    <property type="project" value="UniProt"/>
</dbReference>
<dbReference type="GO" id="GO:0070062">
    <property type="term" value="C:extracellular exosome"/>
    <property type="evidence" value="ECO:0007005"/>
    <property type="project" value="UniProtKB"/>
</dbReference>
<dbReference type="GO" id="GO:0005925">
    <property type="term" value="C:focal adhesion"/>
    <property type="evidence" value="ECO:0007005"/>
    <property type="project" value="UniProtKB"/>
</dbReference>
<dbReference type="GO" id="GO:0042470">
    <property type="term" value="C:melanosome"/>
    <property type="evidence" value="ECO:0007669"/>
    <property type="project" value="UniProtKB-SubCell"/>
</dbReference>
<dbReference type="GO" id="GO:0016020">
    <property type="term" value="C:membrane"/>
    <property type="evidence" value="ECO:0007005"/>
    <property type="project" value="UniProtKB"/>
</dbReference>
<dbReference type="GO" id="GO:0031966">
    <property type="term" value="C:mitochondrial membrane"/>
    <property type="evidence" value="ECO:0000305"/>
    <property type="project" value="UniProt"/>
</dbReference>
<dbReference type="GO" id="GO:0005634">
    <property type="term" value="C:nucleus"/>
    <property type="evidence" value="ECO:0000314"/>
    <property type="project" value="UniProtKB"/>
</dbReference>
<dbReference type="GO" id="GO:0045296">
    <property type="term" value="F:cadherin binding"/>
    <property type="evidence" value="ECO:0007005"/>
    <property type="project" value="BHF-UCL"/>
</dbReference>
<dbReference type="GO" id="GO:0019855">
    <property type="term" value="F:calcium channel inhibitor activity"/>
    <property type="evidence" value="ECO:0000314"/>
    <property type="project" value="ARUK-UCL"/>
</dbReference>
<dbReference type="GO" id="GO:0005246">
    <property type="term" value="F:calcium channel regulator activity"/>
    <property type="evidence" value="ECO:0000314"/>
    <property type="project" value="ARUK-UCL"/>
</dbReference>
<dbReference type="GO" id="GO:0019899">
    <property type="term" value="F:enzyme binding"/>
    <property type="evidence" value="ECO:0000353"/>
    <property type="project" value="UniProtKB"/>
</dbReference>
<dbReference type="GO" id="GO:0042826">
    <property type="term" value="F:histone deacetylase binding"/>
    <property type="evidence" value="ECO:0000353"/>
    <property type="project" value="BHF-UCL"/>
</dbReference>
<dbReference type="GO" id="GO:0042802">
    <property type="term" value="F:identical protein binding"/>
    <property type="evidence" value="ECO:0000353"/>
    <property type="project" value="IntAct"/>
</dbReference>
<dbReference type="GO" id="GO:0023026">
    <property type="term" value="F:MHC class II protein complex binding"/>
    <property type="evidence" value="ECO:0007005"/>
    <property type="project" value="UniProtKB"/>
</dbReference>
<dbReference type="GO" id="GO:0051219">
    <property type="term" value="F:phosphoprotein binding"/>
    <property type="evidence" value="ECO:0000353"/>
    <property type="project" value="BHF-UCL"/>
</dbReference>
<dbReference type="GO" id="GO:0050815">
    <property type="term" value="F:phosphoserine residue binding"/>
    <property type="evidence" value="ECO:0000353"/>
    <property type="project" value="BHF-UCL"/>
</dbReference>
<dbReference type="GO" id="GO:0015459">
    <property type="term" value="F:potassium channel regulator activity"/>
    <property type="evidence" value="ECO:0000314"/>
    <property type="project" value="BHF-UCL"/>
</dbReference>
<dbReference type="GO" id="GO:0019904">
    <property type="term" value="F:protein domain specific binding"/>
    <property type="evidence" value="ECO:0007669"/>
    <property type="project" value="Ensembl"/>
</dbReference>
<dbReference type="GO" id="GO:0046982">
    <property type="term" value="F:protein heterodimerization activity"/>
    <property type="evidence" value="ECO:0000353"/>
    <property type="project" value="BHF-UCL"/>
</dbReference>
<dbReference type="GO" id="GO:0019903">
    <property type="term" value="F:protein phosphatase binding"/>
    <property type="evidence" value="ECO:0007669"/>
    <property type="project" value="Ensembl"/>
</dbReference>
<dbReference type="GO" id="GO:0004864">
    <property type="term" value="F:protein phosphatase inhibitor activity"/>
    <property type="evidence" value="ECO:0007669"/>
    <property type="project" value="Ensembl"/>
</dbReference>
<dbReference type="GO" id="GO:0140311">
    <property type="term" value="F:protein sequestering activity"/>
    <property type="evidence" value="ECO:0000314"/>
    <property type="project" value="UniProt"/>
</dbReference>
<dbReference type="GO" id="GO:0003723">
    <property type="term" value="F:RNA binding"/>
    <property type="evidence" value="ECO:0007005"/>
    <property type="project" value="UniProtKB"/>
</dbReference>
<dbReference type="GO" id="GO:0097110">
    <property type="term" value="F:scaffold protein binding"/>
    <property type="evidence" value="ECO:0000353"/>
    <property type="project" value="UniProtKB"/>
</dbReference>
<dbReference type="GO" id="GO:0035591">
    <property type="term" value="F:signaling adaptor activity"/>
    <property type="evidence" value="ECO:0000314"/>
    <property type="project" value="UniProt"/>
</dbReference>
<dbReference type="GO" id="GO:0044325">
    <property type="term" value="F:transmembrane transporter binding"/>
    <property type="evidence" value="ECO:0000353"/>
    <property type="project" value="BHF-UCL"/>
</dbReference>
<dbReference type="GO" id="GO:0031625">
    <property type="term" value="F:ubiquitin protein ligase binding"/>
    <property type="evidence" value="ECO:0000353"/>
    <property type="project" value="ParkinsonsUK-UCL"/>
</dbReference>
<dbReference type="GO" id="GO:0034605">
    <property type="term" value="P:cellular response to heat"/>
    <property type="evidence" value="ECO:0000314"/>
    <property type="project" value="UniProtKB"/>
</dbReference>
<dbReference type="GO" id="GO:0021987">
    <property type="term" value="P:cerebral cortex development"/>
    <property type="evidence" value="ECO:0007669"/>
    <property type="project" value="Ensembl"/>
</dbReference>
<dbReference type="GO" id="GO:0002753">
    <property type="term" value="P:cytoplasmic pattern recognition receptor signaling pathway"/>
    <property type="evidence" value="ECO:0000314"/>
    <property type="project" value="UniProt"/>
</dbReference>
<dbReference type="GO" id="GO:0021766">
    <property type="term" value="P:hippocampus development"/>
    <property type="evidence" value="ECO:0007669"/>
    <property type="project" value="Ensembl"/>
</dbReference>
<dbReference type="GO" id="GO:0030007">
    <property type="term" value="P:intracellular potassium ion homeostasis"/>
    <property type="evidence" value="ECO:0000314"/>
    <property type="project" value="UniProt"/>
</dbReference>
<dbReference type="GO" id="GO:0035556">
    <property type="term" value="P:intracellular signal transduction"/>
    <property type="evidence" value="ECO:0000304"/>
    <property type="project" value="ProtInc"/>
</dbReference>
<dbReference type="GO" id="GO:0000165">
    <property type="term" value="P:MAPK cascade"/>
    <property type="evidence" value="ECO:0000314"/>
    <property type="project" value="UniProtKB"/>
</dbReference>
<dbReference type="GO" id="GO:0086013">
    <property type="term" value="P:membrane repolarization during cardiac muscle cell action potential"/>
    <property type="evidence" value="ECO:0000305"/>
    <property type="project" value="BHF-UCL"/>
</dbReference>
<dbReference type="GO" id="GO:1905913">
    <property type="term" value="P:negative regulation of calcium ion export across plasma membrane"/>
    <property type="evidence" value="ECO:0000314"/>
    <property type="project" value="ARUK-UCL"/>
</dbReference>
<dbReference type="GO" id="GO:0034122">
    <property type="term" value="P:negative regulation of toll-like receptor signaling pathway"/>
    <property type="evidence" value="ECO:0000314"/>
    <property type="project" value="UniProt"/>
</dbReference>
<dbReference type="GO" id="GO:0001764">
    <property type="term" value="P:neuron migration"/>
    <property type="evidence" value="ECO:0007669"/>
    <property type="project" value="Ensembl"/>
</dbReference>
<dbReference type="GO" id="GO:0035332">
    <property type="term" value="P:positive regulation of hippo signaling"/>
    <property type="evidence" value="ECO:0000314"/>
    <property type="project" value="UniProt"/>
</dbReference>
<dbReference type="GO" id="GO:0046827">
    <property type="term" value="P:positive regulation of protein export from nucleus"/>
    <property type="evidence" value="ECO:0000314"/>
    <property type="project" value="UniProtKB"/>
</dbReference>
<dbReference type="GO" id="GO:0008104">
    <property type="term" value="P:protein localization"/>
    <property type="evidence" value="ECO:0000318"/>
    <property type="project" value="GO_Central"/>
</dbReference>
<dbReference type="GO" id="GO:0070972">
    <property type="term" value="P:protein localization to endoplasmic reticulum"/>
    <property type="evidence" value="ECO:0000314"/>
    <property type="project" value="UniProt"/>
</dbReference>
<dbReference type="GO" id="GO:0034504">
    <property type="term" value="P:protein localization to nucleus"/>
    <property type="evidence" value="ECO:0000315"/>
    <property type="project" value="UniProtKB"/>
</dbReference>
<dbReference type="GO" id="GO:0006605">
    <property type="term" value="P:protein targeting"/>
    <property type="evidence" value="ECO:0007669"/>
    <property type="project" value="Ensembl"/>
</dbReference>
<dbReference type="GO" id="GO:0051480">
    <property type="term" value="P:regulation of cytosolic calcium ion concentration"/>
    <property type="evidence" value="ECO:0000314"/>
    <property type="project" value="ARUK-UCL"/>
</dbReference>
<dbReference type="GO" id="GO:0086091">
    <property type="term" value="P:regulation of heart rate by cardiac conduction"/>
    <property type="evidence" value="ECO:0000305"/>
    <property type="project" value="BHF-UCL"/>
</dbReference>
<dbReference type="GO" id="GO:0003064">
    <property type="term" value="P:regulation of heart rate by hormone"/>
    <property type="evidence" value="ECO:0000303"/>
    <property type="project" value="BHF-UCL"/>
</dbReference>
<dbReference type="GO" id="GO:0060306">
    <property type="term" value="P:regulation of membrane repolarization"/>
    <property type="evidence" value="ECO:0000314"/>
    <property type="project" value="BHF-UCL"/>
</dbReference>
<dbReference type="GO" id="GO:0007346">
    <property type="term" value="P:regulation of mitotic cell cycle"/>
    <property type="evidence" value="ECO:0000318"/>
    <property type="project" value="GO_Central"/>
</dbReference>
<dbReference type="GO" id="GO:1901379">
    <property type="term" value="P:regulation of potassium ion transmembrane transport"/>
    <property type="evidence" value="ECO:0000314"/>
    <property type="project" value="BHF-UCL"/>
</dbReference>
<dbReference type="GO" id="GO:0007165">
    <property type="term" value="P:signal transduction"/>
    <property type="evidence" value="ECO:0000318"/>
    <property type="project" value="GO_Central"/>
</dbReference>
<dbReference type="GO" id="GO:0021762">
    <property type="term" value="P:substantia nigra development"/>
    <property type="evidence" value="ECO:0007007"/>
    <property type="project" value="UniProtKB"/>
</dbReference>
<dbReference type="CDD" id="cd10020">
    <property type="entry name" value="14-3-3_epsilon"/>
    <property type="match status" value="1"/>
</dbReference>
<dbReference type="FunFam" id="1.20.190.20:FF:000002">
    <property type="entry name" value="14-3-3 protein epsilon"/>
    <property type="match status" value="1"/>
</dbReference>
<dbReference type="Gene3D" id="1.20.190.20">
    <property type="entry name" value="14-3-3 domain"/>
    <property type="match status" value="1"/>
</dbReference>
<dbReference type="IDEAL" id="IID00512"/>
<dbReference type="InterPro" id="IPR000308">
    <property type="entry name" value="14-3-3"/>
</dbReference>
<dbReference type="InterPro" id="IPR023409">
    <property type="entry name" value="14-3-3_CS"/>
</dbReference>
<dbReference type="InterPro" id="IPR036815">
    <property type="entry name" value="14-3-3_dom_sf"/>
</dbReference>
<dbReference type="InterPro" id="IPR023410">
    <property type="entry name" value="14-3-3_domain"/>
</dbReference>
<dbReference type="PANTHER" id="PTHR18860">
    <property type="entry name" value="14-3-3 PROTEIN"/>
    <property type="match status" value="1"/>
</dbReference>
<dbReference type="Pfam" id="PF00244">
    <property type="entry name" value="14-3-3"/>
    <property type="match status" value="1"/>
</dbReference>
<dbReference type="PIRSF" id="PIRSF000868">
    <property type="entry name" value="14-3-3"/>
    <property type="match status" value="1"/>
</dbReference>
<dbReference type="PRINTS" id="PR00305">
    <property type="entry name" value="1433ZETA"/>
</dbReference>
<dbReference type="SMART" id="SM00101">
    <property type="entry name" value="14_3_3"/>
    <property type="match status" value="1"/>
</dbReference>
<dbReference type="SUPFAM" id="SSF48445">
    <property type="entry name" value="14-3-3 protein"/>
    <property type="match status" value="1"/>
</dbReference>
<dbReference type="PROSITE" id="PS00796">
    <property type="entry name" value="1433_1"/>
    <property type="match status" value="1"/>
</dbReference>
<dbReference type="PROSITE" id="PS00797">
    <property type="entry name" value="1433_2"/>
    <property type="match status" value="1"/>
</dbReference>
<accession>P62258</accession>
<accession>B3KY71</accession>
<accession>D3DTH5</accession>
<accession>P29360</accession>
<accession>P42655</accession>
<accession>Q4VJB6</accession>
<accession>Q53XZ5</accession>
<accession>Q63631</accession>
<accession>Q7M4R4</accession>
<protein>
    <recommendedName>
        <fullName>14-3-3 protein epsilon</fullName>
        <shortName>14-3-3E</shortName>
    </recommendedName>
</protein>
<sequence>MDDREDLVYQAKLAEQAERYDEMVESMKKVAGMDVELTVEERNLLSVAYKNVIGARRASWRIISSIEQKEENKGGEDKLKMIREYRQMVETELKLICCDILDVLDKHLIPAANTGESKVFYYKMKGDYHRYLAEFATGNDRKEAAENSLVAYKAASDIAMTELPPTHPIRLGLALNFSVFYYEILNSPDRACRLAKAAFDDAIAELDTLSEESYKDSTLIMQLLRDNLTLWTSDMQGDGEEQNKEALQDVEDENQ</sequence>
<proteinExistence type="evidence at protein level"/>
<evidence type="ECO:0000250" key="1">
    <source>
        <dbReference type="UniProtKB" id="P62259"/>
    </source>
</evidence>
<evidence type="ECO:0000250" key="2">
    <source>
        <dbReference type="UniProtKB" id="P62260"/>
    </source>
</evidence>
<evidence type="ECO:0000250" key="3">
    <source>
        <dbReference type="UniProtKB" id="P62261"/>
    </source>
</evidence>
<evidence type="ECO:0000256" key="4">
    <source>
        <dbReference type="SAM" id="MobiDB-lite"/>
    </source>
</evidence>
<evidence type="ECO:0000269" key="5">
    <source>
    </source>
</evidence>
<evidence type="ECO:0000269" key="6">
    <source>
    </source>
</evidence>
<evidence type="ECO:0000269" key="7">
    <source>
    </source>
</evidence>
<evidence type="ECO:0000269" key="8">
    <source>
    </source>
</evidence>
<evidence type="ECO:0000269" key="9">
    <source>
    </source>
</evidence>
<evidence type="ECO:0000269" key="10">
    <source>
    </source>
</evidence>
<evidence type="ECO:0000269" key="11">
    <source>
    </source>
</evidence>
<evidence type="ECO:0000269" key="12">
    <source>
    </source>
</evidence>
<evidence type="ECO:0000269" key="13">
    <source>
    </source>
</evidence>
<evidence type="ECO:0000269" key="14">
    <source>
    </source>
</evidence>
<evidence type="ECO:0000269" key="15">
    <source>
    </source>
</evidence>
<evidence type="ECO:0000269" key="16">
    <source>
    </source>
</evidence>
<evidence type="ECO:0000269" key="17">
    <source>
    </source>
</evidence>
<evidence type="ECO:0000269" key="18">
    <source>
    </source>
</evidence>
<evidence type="ECO:0000269" key="19">
    <source>
    </source>
</evidence>
<evidence type="ECO:0000269" key="20">
    <source>
    </source>
</evidence>
<evidence type="ECO:0000269" key="21">
    <source>
    </source>
</evidence>
<evidence type="ECO:0000269" key="22">
    <source>
    </source>
</evidence>
<evidence type="ECO:0000269" key="23">
    <source>
    </source>
</evidence>
<evidence type="ECO:0000269" key="24">
    <source>
    </source>
</evidence>
<evidence type="ECO:0000269" key="25">
    <source>
    </source>
</evidence>
<evidence type="ECO:0000269" key="26">
    <source>
    </source>
</evidence>
<evidence type="ECO:0000269" key="27">
    <source>
    </source>
</evidence>
<evidence type="ECO:0000269" key="28">
    <source>
    </source>
</evidence>
<evidence type="ECO:0000269" key="29">
    <source>
    </source>
</evidence>
<evidence type="ECO:0000269" key="30">
    <source>
    </source>
</evidence>
<evidence type="ECO:0000269" key="31">
    <source ref="13"/>
</evidence>
<evidence type="ECO:0000303" key="32">
    <source>
    </source>
</evidence>
<evidence type="ECO:0000303" key="33">
    <source>
    </source>
</evidence>
<evidence type="ECO:0000305" key="34"/>
<evidence type="ECO:0007744" key="35">
    <source>
    </source>
</evidence>
<evidence type="ECO:0007744" key="36">
    <source>
    </source>
</evidence>
<evidence type="ECO:0007744" key="37">
    <source>
    </source>
</evidence>
<evidence type="ECO:0007744" key="38">
    <source>
    </source>
</evidence>
<evidence type="ECO:0007744" key="39">
    <source>
    </source>
</evidence>
<evidence type="ECO:0007744" key="40">
    <source>
    </source>
</evidence>
<evidence type="ECO:0007744" key="41">
    <source>
    </source>
</evidence>
<evidence type="ECO:0007829" key="42">
    <source>
        <dbReference type="PDB" id="2BR9"/>
    </source>
</evidence>
<evidence type="ECO:0007829" key="43">
    <source>
        <dbReference type="PDB" id="8Q1S"/>
    </source>
</evidence>
<organism>
    <name type="scientific">Homo sapiens</name>
    <name type="common">Human</name>
    <dbReference type="NCBI Taxonomy" id="9606"/>
    <lineage>
        <taxon>Eukaryota</taxon>
        <taxon>Metazoa</taxon>
        <taxon>Chordata</taxon>
        <taxon>Craniata</taxon>
        <taxon>Vertebrata</taxon>
        <taxon>Euteleostomi</taxon>
        <taxon>Mammalia</taxon>
        <taxon>Eutheria</taxon>
        <taxon>Euarchontoglires</taxon>
        <taxon>Primates</taxon>
        <taxon>Haplorrhini</taxon>
        <taxon>Catarrhini</taxon>
        <taxon>Hominidae</taxon>
        <taxon>Homo</taxon>
    </lineage>
</organism>
<comment type="function">
    <text evidence="3 9 19 20 28 29 30">Adapter protein implicated in the regulation of a large spectrum of both general and specialized signaling pathways (PubMed:21189250). Binds to a large number of partners, usually by recognition of a phosphoserine or phosphothreonine motif (PubMed:35343654). Binding generally results in the modulation of the activity of the binding partner (By similarity). Positively regulates phosphorylated protein HSF1 nuclear export to the cytoplasm (PubMed:12917326). Plays a positive role in the antiviral signaling pathway upstream of TBK1 via interaction with RIGI (PubMed:37555661). Mechanistically, directs RIGI redistribution from the cytosol to mitochondrial associated membranes where it mediates MAVS-dependent innate immune signaling during viral infection (PubMed:22607805). Plays a role in proliferation inhibition and cell cycle arrest by exporting HNRNPC from the nucleus to the cytoplasm to be degraded by ubiquitination (PubMed:37599448).</text>
</comment>
<comment type="subunit">
    <text evidence="1 2 5 7 8 9 10 11 12 14 15 16 17 18 19 20 21 22 23 24 25 26 27 28 29 30">Homodimer (PubMed:17085597). Heterodimerizes with YWHAZ (PubMed:16376338). Interacts with PKA-phosphorylated AANAT (PubMed:11427721). Interacts with ABL1 (phosphorylated form); the interaction retains it in the cytoplasm (PubMed:15696159). Interacts with ARHGEF28 (By similarity). Interacts with BEX3 (By similarity). Weakly interacts with CDKN1B (PubMed:12042314). Interacts with the 'Thr-369' phosphorylated form of DAPK2 (PubMed:26047703). Interacts with DENND1A (PubMed:26055712). Interacts with GAB2 (PubMed:19172738). Interacts with phosphorylated GRB10 (PubMed:15722337). Interacts with KSR1 (PubMed:10409742). Interacts with NDEL1 (By similarity). Interacts with PI4KB, TBC1D22A and TBC1D22B (PubMed:23572552). Interacts with the phosphorylated (by AKT1) form of SRPK2 (PubMed:19592491). Interacts with TIAM2. Interacts with the 'Ser-1134' and 'Ser-1161' phosphorylated form of SOS1 (By similarity). Interacts with ZFP36 (via phosphorylated form) (By similarity). Interacts with SLITRK1 (PubMed:19640509). Interacts with HSF1 (via phosphorylated form); this interaction promotes HSF1 sequestration in the cytoplasm in a ERK-dependent manner (PubMed:12917326). Interacts with RIPOR2 isoform 2 (PubMed:25588844). Interacts with KLHL22; required for the nuclear localization of KLHL22 upon amino acid starvation (PubMed:29769719). Interacts with CRTC1 (PubMed:30611118). Interacts with CRTC2 (probably when phosphorylated at 'Ser-171') (PubMed:30611118). Interacts with CRTC3 (probably when phosphorylated at 'Ser-162' and/or 'Ser-273') (PubMed:30611118). Interacts with ATP2B1 and ATP2B3; this interaction inhibits calcium-transporting ATPase activity (PubMed:18029012). Interacts with MEFV (PubMed:27030597). Interacts with RIGI (PubMed:22607805, PubMed:37555661). Interacts with TRIM25 (PubMed:22607805). Interacts with HNRNPC (PubMed:37599448). Interacts with RNF115 (PubMed:35343654). Interacts with GPR15; this interaction promotes ER-to-Golgi transport of GPR15 (PubMed:21189250).</text>
</comment>
<comment type="subunit">
    <text evidence="6">(Microbial infection) Interacts with HCV core protein.</text>
</comment>
<comment type="interaction">
    <interactant intactId="EBI-356498">
        <id>P62258</id>
    </interactant>
    <interactant intactId="EBI-375543">
        <id>P00519</id>
        <label>ABL1</label>
    </interactant>
    <organismsDiffer>false</organismsDiffer>
    <experiments>6</experiments>
</comment>
<comment type="interaction">
    <interactant intactId="EBI-356498">
        <id>P62258</id>
    </interactant>
    <interactant intactId="EBI-487024">
        <id>O14639</id>
        <label>ABLIM1</label>
    </interactant>
    <organismsDiffer>false</organismsDiffer>
    <experiments>7</experiments>
</comment>
<comment type="interaction">
    <interactant intactId="EBI-356498">
        <id>P62258</id>
    </interactant>
    <interactant intactId="EBI-11603395">
        <id>Q8N961</id>
        <label>ABTB2</label>
    </interactant>
    <organismsDiffer>false</organismsDiffer>
    <experiments>2</experiments>
</comment>
<comment type="interaction">
    <interactant intactId="EBI-356498">
        <id>P62258</id>
    </interactant>
    <interactant intactId="EBI-717666">
        <id>Q96AP0</id>
        <label>ACD</label>
    </interactant>
    <organismsDiffer>false</organismsDiffer>
    <experiments>2</experiments>
</comment>
<comment type="interaction">
    <interactant intactId="EBI-356498">
        <id>P62258</id>
    </interactant>
    <interactant intactId="EBI-6423957">
        <id>Q96QP1</id>
        <label>ALPK1</label>
    </interactant>
    <organismsDiffer>false</organismsDiffer>
    <experiments>2</experiments>
</comment>
<comment type="interaction">
    <interactant intactId="EBI-356498">
        <id>P62258</id>
    </interactant>
    <interactant intactId="EBI-446492">
        <id>O14727</id>
        <label>APAF1</label>
    </interactant>
    <organismsDiffer>false</organismsDiffer>
    <experiments>2</experiments>
</comment>
<comment type="interaction">
    <interactant intactId="EBI-356498">
        <id>P62258</id>
    </interactant>
    <interactant intactId="EBI-365961">
        <id>P10398</id>
        <label>ARAF</label>
    </interactant>
    <organismsDiffer>false</organismsDiffer>
    <experiments>8</experiments>
</comment>
<comment type="interaction">
    <interactant intactId="EBI-356498">
        <id>P62258</id>
    </interactant>
    <interactant intactId="EBI-1057448">
        <id>Q5VV41</id>
        <label>ARHGEF16</label>
    </interactant>
    <organismsDiffer>false</organismsDiffer>
    <experiments>4</experiments>
</comment>
<comment type="interaction">
    <interactant intactId="EBI-356498">
        <id>P62258</id>
    </interactant>
    <interactant intactId="EBI-302405">
        <id>Q92974</id>
        <label>ARHGEF2</label>
    </interactant>
    <organismsDiffer>false</organismsDiffer>
    <experiments>6</experiments>
</comment>
<comment type="interaction">
    <interactant intactId="EBI-356498">
        <id>P62258</id>
    </interactant>
    <interactant intactId="EBI-6658043">
        <id>Q5SQI0</id>
        <label>ATAT1</label>
    </interactant>
    <organismsDiffer>false</organismsDiffer>
    <experiments>2</experiments>
</comment>
<comment type="interaction">
    <interactant intactId="EBI-356498">
        <id>P62258</id>
    </interactant>
    <interactant intactId="EBI-930964">
        <id>P54253</id>
        <label>ATXN1</label>
    </interactant>
    <organismsDiffer>false</organismsDiffer>
    <experiments>10</experiments>
</comment>
<comment type="interaction">
    <interactant intactId="EBI-356498">
        <id>P62258</id>
    </interactant>
    <interactant intactId="EBI-700771">
        <id>Q92934</id>
        <label>BAD</label>
    </interactant>
    <organismsDiffer>false</organismsDiffer>
    <experiments>8</experiments>
</comment>
<comment type="interaction">
    <interactant intactId="EBI-356498">
        <id>P62258</id>
    </interactant>
    <interactant intactId="EBI-525456">
        <id>Q9UQB8</id>
        <label>BAIAP2</label>
    </interactant>
    <organismsDiffer>false</organismsDiffer>
    <experiments>7</experiments>
</comment>
<comment type="interaction">
    <interactant intactId="EBI-356498">
        <id>P62258</id>
    </interactant>
    <interactant intactId="EBI-527196">
        <id>Q13873</id>
        <label>BMPR2</label>
    </interactant>
    <organismsDiffer>false</organismsDiffer>
    <experiments>2</experiments>
</comment>
<comment type="interaction">
    <interactant intactId="EBI-356498">
        <id>P62258</id>
    </interactant>
    <interactant intactId="EBI-696657">
        <id>P51813</id>
        <label>BMX</label>
    </interactant>
    <organismsDiffer>false</organismsDiffer>
    <experiments>2</experiments>
</comment>
<comment type="interaction">
    <interactant intactId="EBI-356498">
        <id>P62258</id>
    </interactant>
    <interactant intactId="EBI-365980">
        <id>P15056</id>
        <label>BRAF</label>
    </interactant>
    <organismsDiffer>false</organismsDiffer>
    <experiments>10</experiments>
</comment>
<comment type="interaction">
    <interactant intactId="EBI-356498">
        <id>P62258</id>
    </interactant>
    <interactant intactId="EBI-3232062">
        <id>Q8IWQ3</id>
        <label>BRSK2</label>
    </interactant>
    <organismsDiffer>false</organismsDiffer>
    <experiments>2</experiments>
</comment>
<comment type="interaction">
    <interactant intactId="EBI-356498">
        <id>P62258</id>
    </interactant>
    <interactant intactId="EBI-1001438">
        <id>O60566</id>
        <label>BUB1B</label>
    </interactant>
    <organismsDiffer>false</organismsDiffer>
    <experiments>2</experiments>
</comment>
<comment type="interaction">
    <interactant intactId="EBI-356498">
        <id>P62258</id>
    </interactant>
    <interactant intactId="EBI-1383687">
        <id>Q9UQM7</id>
        <label>CAMK2A</label>
    </interactant>
    <organismsDiffer>false</organismsDiffer>
    <experiments>2</experiments>
</comment>
<comment type="interaction">
    <interactant intactId="EBI-356498">
        <id>P62258</id>
    </interactant>
    <interactant intactId="EBI-351018">
        <id>Q13557</id>
        <label>CAMK2D</label>
    </interactant>
    <organismsDiffer>false</organismsDiffer>
    <experiments>2</experiments>
</comment>
<comment type="interaction">
    <interactant intactId="EBI-356498">
        <id>P62258</id>
    </interactant>
    <interactant intactId="EBI-6424030">
        <id>Q8N5S9</id>
        <label>CAMKK1</label>
    </interactant>
    <organismsDiffer>false</organismsDiffer>
    <experiments>3</experiments>
</comment>
<comment type="interaction">
    <interactant intactId="EBI-356498">
        <id>P62258</id>
    </interactant>
    <interactant intactId="EBI-518228">
        <id>P22681</id>
        <label>CBL</label>
    </interactant>
    <organismsDiffer>false</organismsDiffer>
    <experiments>6</experiments>
</comment>
<comment type="interaction">
    <interactant intactId="EBI-356498">
        <id>P62258</id>
    </interactant>
    <interactant intactId="EBI-4392727">
        <id>O00257-3</id>
        <label>CBX4</label>
    </interactant>
    <organismsDiffer>false</organismsDiffer>
    <experiments>2</experiments>
</comment>
<comment type="interaction">
    <interactant intactId="EBI-356498">
        <id>P62258</id>
    </interactant>
    <interactant intactId="EBI-947308">
        <id>Q9Y3M2</id>
        <label>CBY1</label>
    </interactant>
    <organismsDiffer>false</organismsDiffer>
    <experiments>4</experiments>
</comment>
<comment type="interaction">
    <interactant intactId="EBI-356498">
        <id>P62258</id>
    </interactant>
    <interactant intactId="EBI-11977221">
        <id>Q86Z20</id>
        <label>CCDC125</label>
    </interactant>
    <organismsDiffer>false</organismsDiffer>
    <experiments>3</experiments>
</comment>
<comment type="interaction">
    <interactant intactId="EBI-356498">
        <id>P62258</id>
    </interactant>
    <interactant intactId="EBI-747671">
        <id>P30304</id>
        <label>CDC25A</label>
    </interactant>
    <organismsDiffer>false</organismsDiffer>
    <experiments>3</experiments>
</comment>
<comment type="interaction">
    <interactant intactId="EBI-356498">
        <id>P62258</id>
    </interactant>
    <interactant intactId="EBI-1051746">
        <id>P30305</id>
        <label>CDC25B</label>
    </interactant>
    <organismsDiffer>false</organismsDiffer>
    <experiments>5</experiments>
</comment>
<comment type="interaction">
    <interactant intactId="EBI-356498">
        <id>P62258</id>
    </interactant>
    <interactant intactId="EBI-974439">
        <id>P30307</id>
        <label>CDC25C</label>
    </interactant>
    <organismsDiffer>false</organismsDiffer>
    <experiments>6</experiments>
</comment>
<comment type="interaction">
    <interactant intactId="EBI-356498">
        <id>P62258</id>
    </interactant>
    <interactant intactId="EBI-1043945">
        <id>O94921</id>
        <label>CDK14</label>
    </interactant>
    <organismsDiffer>false</organismsDiffer>
    <experiments>4</experiments>
</comment>
<comment type="interaction">
    <interactant intactId="EBI-356498">
        <id>P62258</id>
    </interactant>
    <interactant intactId="EBI-726261">
        <id>Q00536</id>
        <label>CDK16</label>
    </interactant>
    <organismsDiffer>false</organismsDiffer>
    <experiments>5</experiments>
</comment>
<comment type="interaction">
    <interactant intactId="EBI-356498">
        <id>P62258</id>
    </interactant>
    <interactant intactId="EBI-624648">
        <id>Q00537</id>
        <label>CDK17</label>
    </interactant>
    <organismsDiffer>false</organismsDiffer>
    <experiments>4</experiments>
</comment>
<comment type="interaction">
    <interactant intactId="EBI-356498">
        <id>P62258</id>
    </interactant>
    <interactant intactId="EBI-746238">
        <id>Q07002</id>
        <label>CDK18</label>
    </interactant>
    <organismsDiffer>false</organismsDiffer>
    <experiments>4</experiments>
</comment>
<comment type="interaction">
    <interactant intactId="EBI-356498">
        <id>P62258</id>
    </interactant>
    <interactant intactId="EBI-1245761">
        <id>Q00526</id>
        <label>CDK3</label>
    </interactant>
    <organismsDiffer>false</organismsDiffer>
    <experiments>2</experiments>
</comment>
<comment type="interaction">
    <interactant intactId="EBI-356498">
        <id>P62258</id>
    </interactant>
    <interactant intactId="EBI-2836899">
        <id>Q8N8E3</id>
        <label>CEP112</label>
    </interactant>
    <organismsDiffer>false</organismsDiffer>
    <experiments>4</experiments>
</comment>
<comment type="interaction">
    <interactant intactId="EBI-356498">
        <id>P62258</id>
    </interactant>
    <interactant intactId="EBI-372775">
        <id>Q96GE4</id>
        <label>CEP95</label>
    </interactant>
    <organismsDiffer>false</organismsDiffer>
    <experiments>3</experiments>
</comment>
<comment type="interaction">
    <interactant intactId="EBI-356498">
        <id>P62258</id>
    </interactant>
    <interactant intactId="EBI-3388952">
        <id>Q0VF96</id>
        <label>CGNL1</label>
    </interactant>
    <organismsDiffer>false</organismsDiffer>
    <experiments>3</experiments>
</comment>
<comment type="interaction">
    <interactant intactId="EBI-356498">
        <id>P62258</id>
    </interactant>
    <interactant intactId="EBI-1020839">
        <id>Q13111</id>
        <label>CHAF1A</label>
    </interactant>
    <organismsDiffer>false</organismsDiffer>
    <experiments>3</experiments>
</comment>
<comment type="interaction">
    <interactant intactId="EBI-356498">
        <id>P62258</id>
    </interactant>
    <interactant intactId="EBI-913476">
        <id>Q7Z460</id>
        <label>CLASP1</label>
    </interactant>
    <organismsDiffer>false</organismsDiffer>
    <experiments>7</experiments>
</comment>
<comment type="interaction">
    <interactant intactId="EBI-356498">
        <id>P62258</id>
    </interactant>
    <interactant intactId="EBI-913524">
        <id>O75122</id>
        <label>CLASP2</label>
    </interactant>
    <organismsDiffer>false</organismsDiffer>
    <experiments>8</experiments>
</comment>
<comment type="interaction">
    <interactant intactId="EBI-356498">
        <id>P62258</id>
    </interactant>
    <interactant intactId="EBI-745579">
        <id>P49761</id>
        <label>CLK3</label>
    </interactant>
    <organismsDiffer>false</organismsDiffer>
    <experiments>2</experiments>
</comment>
<comment type="interaction">
    <interactant intactId="EBI-356498">
        <id>P62258</id>
    </interactant>
    <interactant intactId="EBI-1644259">
        <id>Q6UUV9</id>
        <label>CRTC1</label>
    </interactant>
    <organismsDiffer>false</organismsDiffer>
    <experiments>5</experiments>
</comment>
<comment type="interaction">
    <interactant intactId="EBI-356498">
        <id>P62258</id>
    </interactant>
    <interactant intactId="EBI-751621">
        <id>P48730</id>
        <label>CSNK1D</label>
    </interactant>
    <organismsDiffer>false</organismsDiffer>
    <experiments>2</experiments>
</comment>
<comment type="interaction">
    <interactant intactId="EBI-356498">
        <id>P62258</id>
    </interactant>
    <interactant intactId="EBI-749343">
        <id>P49674</id>
        <label>CSNK1E</label>
    </interactant>
    <organismsDiffer>false</organismsDiffer>
    <experiments>3</experiments>
</comment>
<comment type="interaction">
    <interactant intactId="EBI-356498">
        <id>P62258</id>
    </interactant>
    <interactant intactId="EBI-77154">
        <id>Q9UIK4</id>
        <label>DAPK2</label>
    </interactant>
    <organismsDiffer>false</organismsDiffer>
    <experiments>2</experiments>
</comment>
<comment type="interaction">
    <interactant intactId="EBI-356498">
        <id>P62258</id>
    </interactant>
    <interactant intactId="EBI-2930406">
        <id>Q8N568</id>
        <label>DCLK2</label>
    </interactant>
    <organismsDiffer>false</organismsDiffer>
    <experiments>3</experiments>
</comment>
<comment type="interaction">
    <interactant intactId="EBI-356498">
        <id>P62258</id>
    </interactant>
    <interactant intactId="EBI-529989">
        <id>Q9NRI5</id>
        <label>DISC1</label>
    </interactant>
    <organismsDiffer>false</organismsDiffer>
    <experiments>3</experiments>
</comment>
<comment type="interaction">
    <interactant intactId="EBI-356498">
        <id>P62258</id>
    </interactant>
    <interactant intactId="EBI-353366">
        <id>P09622</id>
        <label>DLD</label>
    </interactant>
    <organismsDiffer>false</organismsDiffer>
    <experiments>5</experiments>
</comment>
<comment type="interaction">
    <interactant intactId="EBI-356498">
        <id>P62258</id>
    </interactant>
    <interactant intactId="EBI-351007">
        <id>P36957</id>
        <label>DLST</label>
    </interactant>
    <organismsDiffer>false</organismsDiffer>
    <experiments>4</experiments>
</comment>
<comment type="interaction">
    <interactant intactId="EBI-356498">
        <id>P62258</id>
    </interactant>
    <interactant intactId="EBI-357034">
        <id>P25685</id>
        <label>DNAJB1</label>
    </interactant>
    <organismsDiffer>false</organismsDiffer>
    <experiments>2</experiments>
</comment>
<comment type="interaction">
    <interactant intactId="EBI-356498">
        <id>P62258</id>
    </interactant>
    <interactant intactId="EBI-1049520">
        <id>Q6XUX3</id>
        <label>DSTYK</label>
    </interactant>
    <organismsDiffer>false</organismsDiffer>
    <experiments>2</experiments>
</comment>
<comment type="interaction">
    <interactant intactId="EBI-356498">
        <id>P62258</id>
    </interactant>
    <interactant intactId="EBI-1176075">
        <id>Q9NZJ0</id>
        <label>DTL</label>
    </interactant>
    <organismsDiffer>false</organismsDiffer>
    <experiments>4</experiments>
</comment>
<comment type="interaction">
    <interactant intactId="EBI-356498">
        <id>P62258</id>
    </interactant>
    <interactant intactId="EBI-634187">
        <id>Q9Y463</id>
        <label>DYRK1B</label>
    </interactant>
    <organismsDiffer>false</organismsDiffer>
    <experiments>2</experiments>
</comment>
<comment type="interaction">
    <interactant intactId="EBI-356498">
        <id>P62258</id>
    </interactant>
    <interactant intactId="EBI-749432">
        <id>Q92630</id>
        <label>DYRK2</label>
    </interactant>
    <organismsDiffer>false</organismsDiffer>
    <experiments>2</experiments>
</comment>
<comment type="interaction">
    <interactant intactId="EBI-356498">
        <id>P62258</id>
    </interactant>
    <interactant intactId="EBI-3914009">
        <id>Q9NR20</id>
        <label>DYRK4</label>
    </interactant>
    <organismsDiffer>false</organismsDiffer>
    <experiments>2</experiments>
</comment>
<comment type="interaction">
    <interactant intactId="EBI-356498">
        <id>P62258</id>
    </interactant>
    <interactant intactId="EBI-1052044">
        <id>O43491</id>
        <label>EPB41L2</label>
    </interactant>
    <organismsDiffer>false</organismsDiffer>
    <experiments>3</experiments>
</comment>
<comment type="interaction">
    <interactant intactId="EBI-356498">
        <id>P62258</id>
    </interactant>
    <interactant intactId="EBI-641062">
        <id>P04626</id>
        <label>ERBB2</label>
    </interactant>
    <organismsDiffer>false</organismsDiffer>
    <experiments>2</experiments>
</comment>
<comment type="interaction">
    <interactant intactId="EBI-356498">
        <id>P62258</id>
    </interactant>
    <interactant intactId="EBI-80371">
        <id>Q15303</id>
        <label>ERBB4</label>
    </interactant>
    <organismsDiffer>false</organismsDiffer>
    <experiments>2</experiments>
</comment>
<comment type="interaction">
    <interactant intactId="EBI-356498">
        <id>P62258</id>
    </interactant>
    <interactant intactId="EBI-2558383">
        <id>Q8TC76</id>
        <label>FAM110B</label>
    </interactant>
    <organismsDiffer>false</organismsDiffer>
    <experiments>3</experiments>
</comment>
<comment type="interaction">
    <interactant intactId="EBI-356498">
        <id>P62258</id>
    </interactant>
    <interactant intactId="EBI-960409">
        <id>Q9UKT5</id>
        <label>FBXO4</label>
    </interactant>
    <organismsDiffer>false</organismsDiffer>
    <experiments>5</experiments>
</comment>
<comment type="interaction">
    <interactant intactId="EBI-356498">
        <id>P62258</id>
    </interactant>
    <interactant intactId="EBI-1108782">
        <id>Q12778</id>
        <label>FOXO1</label>
    </interactant>
    <organismsDiffer>false</organismsDiffer>
    <experiments>5</experiments>
</comment>
<comment type="interaction">
    <interactant intactId="EBI-356498">
        <id>P62258</id>
    </interactant>
    <interactant intactId="EBI-1644164">
        <id>O43524</id>
        <label>FOXO3</label>
    </interactant>
    <organismsDiffer>false</organismsDiffer>
    <experiments>5</experiments>
</comment>
<comment type="interaction">
    <interactant intactId="EBI-356498">
        <id>P62258</id>
    </interactant>
    <interactant intactId="EBI-4481939">
        <id>P98177</id>
        <label>FOXO4</label>
    </interactant>
    <organismsDiffer>false</organismsDiffer>
    <experiments>2</experiments>
</comment>
<comment type="interaction">
    <interactant intactId="EBI-356498">
        <id>P62258</id>
    </interactant>
    <interactant intactId="EBI-764342">
        <id>Q9H2C0</id>
        <label>GAN</label>
    </interactant>
    <organismsDiffer>false</organismsDiffer>
    <experiments>2</experiments>
</comment>
<comment type="interaction">
    <interactant intactId="EBI-356498">
        <id>P62258</id>
    </interactant>
    <interactant intactId="EBI-80275">
        <id>Q13322</id>
        <label>GRB10</label>
    </interactant>
    <organismsDiffer>false</organismsDiffer>
    <experiments>3</experiments>
</comment>
<comment type="interaction">
    <interactant intactId="EBI-356498">
        <id>P62258</id>
    </interactant>
    <interactant intactId="EBI-5349621">
        <id>Q9Y3R0</id>
        <label>GRIP1</label>
    </interactant>
    <organismsDiffer>false</organismsDiffer>
    <experiments>4</experiments>
</comment>
<comment type="interaction">
    <interactant intactId="EBI-356498">
        <id>P62258</id>
    </interactant>
    <interactant intactId="EBI-6423032">
        <id>Q8WTQ7</id>
        <label>GRK7</label>
    </interactant>
    <organismsDiffer>false</organismsDiffer>
    <experiments>2</experiments>
</comment>
<comment type="interaction">
    <interactant intactId="EBI-356498">
        <id>P62258</id>
    </interactant>
    <interactant intactId="EBI-1044067">
        <id>P49840</id>
        <label>GSK3A</label>
    </interactant>
    <organismsDiffer>false</organismsDiffer>
    <experiments>3</experiments>
</comment>
<comment type="interaction">
    <interactant intactId="EBI-356498">
        <id>P62258</id>
    </interactant>
    <interactant intactId="EBI-308629">
        <id>P56524</id>
        <label>HDAC4</label>
    </interactant>
    <organismsDiffer>false</organismsDiffer>
    <experiments>9</experiments>
</comment>
<comment type="interaction">
    <interactant intactId="EBI-356498">
        <id>P62258</id>
    </interactant>
    <interactant intactId="EBI-11953488">
        <id>P56524-2</id>
        <label>HDAC4</label>
    </interactant>
    <organismsDiffer>false</organismsDiffer>
    <experiments>3</experiments>
</comment>
<comment type="interaction">
    <interactant intactId="EBI-356498">
        <id>P62258</id>
    </interactant>
    <interactant intactId="EBI-6381114">
        <id>Q8NE63</id>
        <label>HIPK4</label>
    </interactant>
    <organismsDiffer>false</organismsDiffer>
    <experiments>2</experiments>
</comment>
<comment type="interaction">
    <interactant intactId="EBI-356498">
        <id>P62258</id>
    </interactant>
    <interactant intactId="EBI-475981">
        <id>P08069</id>
        <label>IGF1R</label>
    </interactant>
    <organismsDiffer>false</organismsDiffer>
    <experiments>2</experiments>
</comment>
<comment type="interaction">
    <interactant intactId="EBI-356498">
        <id>P62258</id>
    </interactant>
    <interactant intactId="EBI-307369">
        <id>Q14164</id>
        <label>IKBKE</label>
    </interactant>
    <organismsDiffer>false</organismsDiffer>
    <experiments>2</experiments>
</comment>
<comment type="interaction">
    <interactant intactId="EBI-356498">
        <id>P62258</id>
    </interactant>
    <interactant intactId="EBI-747644">
        <id>Q13418</id>
        <label>ILK</label>
    </interactant>
    <organismsDiffer>false</organismsDiffer>
    <experiments>2</experiments>
</comment>
<comment type="interaction">
    <interactant intactId="EBI-356498">
        <id>P62258</id>
    </interactant>
    <interactant intactId="EBI-366258">
        <id>Q16352</id>
        <label>INA</label>
    </interactant>
    <organismsDiffer>false</organismsDiffer>
    <experiments>2</experiments>
</comment>
<comment type="interaction">
    <interactant intactId="EBI-356498">
        <id>P62258</id>
    </interactant>
    <interactant intactId="EBI-517592">
        <id>P35568</id>
        <label>IRS1</label>
    </interactant>
    <organismsDiffer>false</organismsDiffer>
    <experiments>2</experiments>
</comment>
<comment type="interaction">
    <interactant intactId="EBI-356498">
        <id>P62258</id>
    </interactant>
    <interactant intactId="EBI-356594">
        <id>O14654</id>
        <label>IRS4</label>
    </interactant>
    <organismsDiffer>false</organismsDiffer>
    <experiments>6</experiments>
</comment>
<comment type="interaction">
    <interactant intactId="EBI-356498">
        <id>P62258</id>
    </interactant>
    <interactant intactId="EBI-1047335">
        <id>Q9H1K1</id>
        <label>ISCU</label>
    </interactant>
    <organismsDiffer>false</organismsDiffer>
    <experiments>3</experiments>
</comment>
<comment type="interaction">
    <interactant intactId="EBI-356498">
        <id>P62258</id>
    </interactant>
    <interactant intactId="EBI-968552">
        <id>Q08881</id>
        <label>ITK</label>
    </interactant>
    <organismsDiffer>false</organismsDiffer>
    <experiments>2</experiments>
</comment>
<comment type="interaction">
    <interactant intactId="EBI-356498">
        <id>P62258</id>
    </interactant>
    <interactant intactId="EBI-722905">
        <id>P28290</id>
        <label>ITPRID2</label>
    </interactant>
    <organismsDiffer>false</organismsDiffer>
    <experiments>4</experiments>
</comment>
<comment type="interaction">
    <interactant intactId="EBI-356498">
        <id>P62258</id>
    </interactant>
    <interactant intactId="EBI-6173812">
        <id>Q14678-2</id>
        <label>KANK1</label>
    </interactant>
    <organismsDiffer>false</organismsDiffer>
    <experiments>3</experiments>
</comment>
<comment type="interaction">
    <interactant intactId="EBI-356498">
        <id>P62258</id>
    </interactant>
    <interactant intactId="EBI-42485668">
        <id>Q96RP8</id>
        <label>KCNA7</label>
    </interactant>
    <organismsDiffer>false</organismsDiffer>
    <experiments>2</experiments>
</comment>
<comment type="interaction">
    <interactant intactId="EBI-356498">
        <id>P62258</id>
    </interactant>
    <interactant intactId="EBI-6426198">
        <id>Q6ZWB6</id>
        <label>KCTD8</label>
    </interactant>
    <organismsDiffer>false</organismsDiffer>
    <experiments>2</experiments>
</comment>
<comment type="interaction">
    <interactant intactId="EBI-356498">
        <id>P62258</id>
    </interactant>
    <interactant intactId="EBI-1053969">
        <id>Q6ICG6</id>
        <label>KIAA0930</label>
    </interactant>
    <organismsDiffer>false</organismsDiffer>
    <experiments>5</experiments>
</comment>
<comment type="interaction">
    <interactant intactId="EBI-356498">
        <id>P62258</id>
    </interactant>
    <interactant intactId="EBI-465633">
        <id>O60333</id>
        <label>KIF1B</label>
    </interactant>
    <organismsDiffer>false</organismsDiffer>
    <experiments>6</experiments>
</comment>
<comment type="interaction">
    <interactant intactId="EBI-356498">
        <id>P62258</id>
    </interactant>
    <interactant intactId="EBI-1644048">
        <id>O43896</id>
        <label>KIF1C</label>
    </interactant>
    <organismsDiffer>false</organismsDiffer>
    <experiments>6</experiments>
</comment>
<comment type="interaction">
    <interactant intactId="EBI-356498">
        <id>P62258</id>
    </interactant>
    <interactant intactId="EBI-726994">
        <id>Q9H0B6</id>
        <label>KLC2</label>
    </interactant>
    <organismsDiffer>false</organismsDiffer>
    <experiments>6</experiments>
</comment>
<comment type="interaction">
    <interactant intactId="EBI-356498">
        <id>P62258</id>
    </interactant>
    <interactant intactId="EBI-1643885">
        <id>Q6P597</id>
        <label>KLC3</label>
    </interactant>
    <organismsDiffer>false</organismsDiffer>
    <experiments>4</experiments>
</comment>
<comment type="interaction">
    <interactant intactId="EBI-356498">
        <id>P62258</id>
    </interactant>
    <interactant intactId="EBI-949319">
        <id>Q9NSK0</id>
        <label>KLC4</label>
    </interactant>
    <organismsDiffer>false</organismsDiffer>
    <experiments>6</experiments>
</comment>
<comment type="interaction">
    <interactant intactId="EBI-356498">
        <id>P62258</id>
    </interactant>
    <interactant intactId="EBI-486984">
        <id>Q8IVT5</id>
        <label>KSR1</label>
    </interactant>
    <organismsDiffer>false</organismsDiffer>
    <experiments>4</experiments>
</comment>
<comment type="interaction">
    <interactant intactId="EBI-356498">
        <id>P62258</id>
    </interactant>
    <interactant intactId="EBI-1052114">
        <id>Q6PKG0</id>
        <label>LARP1</label>
    </interactant>
    <organismsDiffer>false</organismsDiffer>
    <experiments>6</experiments>
</comment>
<comment type="interaction">
    <interactant intactId="EBI-356498">
        <id>P62258</id>
    </interactant>
    <interactant intactId="EBI-1348">
        <id>P06239</id>
        <label>LCK</label>
    </interactant>
    <organismsDiffer>false</organismsDiffer>
    <experiments>2</experiments>
</comment>
<comment type="interaction">
    <interactant intactId="EBI-356498">
        <id>P62258</id>
    </interactant>
    <interactant intactId="EBI-444403">
        <id>P53667</id>
        <label>LIMK1</label>
    </interactant>
    <organismsDiffer>false</organismsDiffer>
    <experiments>2</experiments>
</comment>
<comment type="interaction">
    <interactant intactId="EBI-356498">
        <id>P62258</id>
    </interactant>
    <interactant intactId="EBI-1384350">
        <id>P53671</id>
        <label>LIMK2</label>
    </interactant>
    <organismsDiffer>false</organismsDiffer>
    <experiments>2</experiments>
</comment>
<comment type="interaction">
    <interactant intactId="EBI-356498">
        <id>P62258</id>
    </interactant>
    <interactant intactId="EBI-5323863">
        <id>Q5S007</id>
        <label>LRRK2</label>
    </interactant>
    <organismsDiffer>false</organismsDiffer>
    <experiments>8</experiments>
</comment>
<comment type="interaction">
    <interactant intactId="EBI-356498">
        <id>P62258</id>
    </interactant>
    <interactant intactId="EBI-350467">
        <id>Q86V48</id>
        <label>LUZP1</label>
    </interactant>
    <organismsDiffer>false</organismsDiffer>
    <experiments>3</experiments>
</comment>
<comment type="interaction">
    <interactant intactId="EBI-356498">
        <id>P62258</id>
    </interactant>
    <interactant intactId="EBI-492605">
        <id>O14733</id>
        <label>MAP2K7</label>
    </interactant>
    <organismsDiffer>false</organismsDiffer>
    <experiments>2</experiments>
</comment>
<comment type="interaction">
    <interactant intactId="EBI-356498">
        <id>P62258</id>
    </interactant>
    <interactant intactId="EBI-358011">
        <id>Q99558</id>
        <label>MAP3K14</label>
    </interactant>
    <organismsDiffer>false</organismsDiffer>
    <experiments>2</experiments>
</comment>
<comment type="interaction">
    <interactant intactId="EBI-356498">
        <id>P62258</id>
    </interactant>
    <interactant intactId="EBI-357393">
        <id>Q9Y2U5</id>
        <label>MAP3K2</label>
    </interactant>
    <organismsDiffer>false</organismsDiffer>
    <experiments>5</experiments>
</comment>
<comment type="interaction">
    <interactant intactId="EBI-356498">
        <id>P62258</id>
    </interactant>
    <interactant intactId="EBI-307281">
        <id>Q99759</id>
        <label>MAP3K3</label>
    </interactant>
    <organismsDiffer>false</organismsDiffer>
    <experiments>6</experiments>
</comment>
<comment type="interaction">
    <interactant intactId="EBI-356498">
        <id>P62258</id>
    </interactant>
    <interactant intactId="EBI-476263">
        <id>Q99683</id>
        <label>MAP3K5</label>
    </interactant>
    <organismsDiffer>false</organismsDiffer>
    <experiments>3</experiments>
</comment>
<comment type="interaction">
    <interactant intactId="EBI-356498">
        <id>P62258</id>
    </interactant>
    <interactant intactId="EBI-1254761">
        <id>O95382</id>
        <label>MAP3K6</label>
    </interactant>
    <organismsDiffer>false</organismsDiffer>
    <experiments>2</experiments>
</comment>
<comment type="interaction">
    <interactant intactId="EBI-356498">
        <id>P62258</id>
    </interactant>
    <interactant intactId="EBI-3951604">
        <id>P80192</id>
        <label>MAP3K9</label>
    </interactant>
    <organismsDiffer>false</organismsDiffer>
    <experiments>3</experiments>
</comment>
<comment type="interaction">
    <interactant intactId="EBI-356498">
        <id>P62258</id>
    </interactant>
    <interactant intactId="EBI-881">
        <id>Q92918</id>
        <label>MAP4K1</label>
    </interactant>
    <organismsDiffer>false</organismsDiffer>
    <experiments>2</experiments>
</comment>
<comment type="interaction">
    <interactant intactId="EBI-356498">
        <id>P62258</id>
    </interactant>
    <interactant intactId="EBI-3906061">
        <id>P31152</id>
        <label>MAPK4</label>
    </interactant>
    <organismsDiffer>false</organismsDiffer>
    <experiments>2</experiments>
</comment>
<comment type="interaction">
    <interactant intactId="EBI-356498">
        <id>P62258</id>
    </interactant>
    <interactant intactId="EBI-707595">
        <id>P27448</id>
        <label>MARK3</label>
    </interactant>
    <organismsDiffer>false</organismsDiffer>
    <experiments>9</experiments>
</comment>
<comment type="interaction">
    <interactant intactId="EBI-356498">
        <id>P62258</id>
    </interactant>
    <interactant intactId="EBI-493777">
        <id>Q6P0Q8</id>
        <label>MAST2</label>
    </interactant>
    <organismsDiffer>false</organismsDiffer>
    <experiments>4</experiments>
</comment>
<comment type="interaction">
    <interactant intactId="EBI-356498">
        <id>P62258</id>
    </interactant>
    <interactant intactId="EBI-751664">
        <id>P42679</id>
        <label>MATK</label>
    </interactant>
    <organismsDiffer>false</organismsDiffer>
    <experiments>2</experiments>
</comment>
<comment type="interaction">
    <interactant intactId="EBI-356498">
        <id>P62258</id>
    </interactant>
    <interactant intactId="EBI-398437">
        <id>O15151</id>
        <label>MDM4</label>
    </interactant>
    <organismsDiffer>false</organismsDiffer>
    <experiments>5</experiments>
</comment>
<comment type="interaction">
    <interactant intactId="EBI-356498">
        <id>P62258</id>
    </interactant>
    <interactant intactId="EBI-722315">
        <id>Q6ZN04</id>
        <label>MEX3B</label>
    </interactant>
    <organismsDiffer>false</organismsDiffer>
    <experiments>2</experiments>
</comment>
<comment type="interaction">
    <interactant intactId="EBI-356498">
        <id>P62258</id>
    </interactant>
    <interactant intactId="EBI-2864451">
        <id>Q5U5Q3</id>
        <label>MEX3C</label>
    </interactant>
    <organismsDiffer>false</organismsDiffer>
    <experiments>3</experiments>
</comment>
<comment type="interaction">
    <interactant intactId="EBI-356498">
        <id>P62258</id>
    </interactant>
    <interactant intactId="EBI-2133481">
        <id>Q8N4C8</id>
        <label>MINK1</label>
    </interactant>
    <organismsDiffer>false</organismsDiffer>
    <experiments>3</experiments>
</comment>
<comment type="interaction">
    <interactant intactId="EBI-356498">
        <id>P62258</id>
    </interactant>
    <interactant intactId="EBI-721328">
        <id>P58340</id>
        <label>MLF1</label>
    </interactant>
    <organismsDiffer>false</organismsDiffer>
    <experiments>3</experiments>
</comment>
<comment type="interaction">
    <interactant intactId="EBI-356498">
        <id>P62258</id>
    </interactant>
    <interactant intactId="EBI-6423196">
        <id>O15146</id>
        <label>MUSK</label>
    </interactant>
    <organismsDiffer>false</organismsDiffer>
    <experiments>2</experiments>
</comment>
<comment type="interaction">
    <interactant intactId="EBI-356498">
        <id>P62258</id>
    </interactant>
    <interactant intactId="EBI-356910">
        <id>Q9H1R3</id>
        <label>MYLK2</label>
    </interactant>
    <organismsDiffer>false</organismsDiffer>
    <experiments>2</experiments>
</comment>
<comment type="interaction">
    <interactant intactId="EBI-356498">
        <id>P62258</id>
    </interactant>
    <interactant intactId="EBI-1222801">
        <id>Q32MK0</id>
        <label>MYLK3</label>
    </interactant>
    <organismsDiffer>false</organismsDiffer>
    <experiments>2</experiments>
</comment>
<comment type="interaction">
    <interactant intactId="EBI-356498">
        <id>P62258</id>
    </interactant>
    <interactant intactId="EBI-308358">
        <id>Q8NEY1</id>
        <label>NAV1</label>
    </interactant>
    <organismsDiffer>false</organismsDiffer>
    <experiments>4</experiments>
</comment>
<comment type="interaction">
    <interactant intactId="EBI-356498">
        <id>P62258</id>
    </interactant>
    <interactant intactId="EBI-941227">
        <id>Q9NXR1</id>
        <label>NDE1</label>
    </interactant>
    <organismsDiffer>false</organismsDiffer>
    <experiments>3</experiments>
</comment>
<comment type="interaction">
    <interactant intactId="EBI-356498">
        <id>P62258</id>
    </interactant>
    <interactant intactId="EBI-726944">
        <id>P46934</id>
        <label>NEDD4</label>
    </interactant>
    <organismsDiffer>false</organismsDiffer>
    <experiments>3</experiments>
</comment>
<comment type="interaction">
    <interactant intactId="EBI-356498">
        <id>P62258</id>
    </interactant>
    <interactant intactId="EBI-717962">
        <id>Q96PU5</id>
        <label>NEDD4L</label>
    </interactant>
    <organismsDiffer>false</organismsDiffer>
    <experiments>6</experiments>
</comment>
<comment type="interaction">
    <interactant intactId="EBI-356498">
        <id>P62258</id>
    </interactant>
    <interactant intactId="EBI-1044009">
        <id>Q8TD19</id>
        <label>NEK9</label>
    </interactant>
    <organismsDiffer>false</organismsDiffer>
    <experiments>2</experiments>
</comment>
<comment type="interaction">
    <interactant intactId="EBI-356498">
        <id>P62258</id>
    </interactant>
    <interactant intactId="EBI-2129917">
        <id>O76050</id>
        <label>NEURL1</label>
    </interactant>
    <organismsDiffer>false</organismsDiffer>
    <experiments>2</experiments>
</comment>
<comment type="interaction">
    <interactant intactId="EBI-356498">
        <id>P62258</id>
    </interactant>
    <interactant intactId="EBI-3936704">
        <id>Q16288</id>
        <label>NTRK3</label>
    </interactant>
    <organismsDiffer>false</organismsDiffer>
    <experiments>2</experiments>
</comment>
<comment type="interaction">
    <interactant intactId="EBI-356498">
        <id>P62258</id>
    </interactant>
    <interactant intactId="EBI-1181722">
        <id>Q9H093</id>
        <label>NUAK2</label>
    </interactant>
    <organismsDiffer>false</organismsDiffer>
    <experiments>2</experiments>
</comment>
<comment type="interaction">
    <interactant intactId="EBI-356498">
        <id>P62258</id>
    </interactant>
    <interactant intactId="EBI-81531">
        <id>P11940</id>
        <label>PABPC1</label>
    </interactant>
    <organismsDiffer>false</organismsDiffer>
    <experiments>2</experiments>
</comment>
<comment type="interaction">
    <interactant intactId="EBI-356498">
        <id>P62258</id>
    </interactant>
    <interactant intactId="EBI-713738">
        <id>O96013</id>
        <label>PAK4</label>
    </interactant>
    <organismsDiffer>false</organismsDiffer>
    <experiments>10</experiments>
</comment>
<comment type="interaction">
    <interactant intactId="EBI-356498">
        <id>P62258</id>
    </interactant>
    <interactant intactId="EBI-741896">
        <id>Q9P286</id>
        <label>PAK5</label>
    </interactant>
    <organismsDiffer>false</organismsDiffer>
    <experiments>3</experiments>
</comment>
<comment type="interaction">
    <interactant intactId="EBI-356498">
        <id>P62258</id>
    </interactant>
    <interactant intactId="EBI-1053685">
        <id>Q9NQU5</id>
        <label>PAK6</label>
    </interactant>
    <organismsDiffer>false</organismsDiffer>
    <experiments>5</experiments>
</comment>
<comment type="interaction">
    <interactant intactId="EBI-356498">
        <id>P62258</id>
    </interactant>
    <interactant intactId="EBI-5459863">
        <id>Q9HBE1</id>
        <label>PATZ1</label>
    </interactant>
    <organismsDiffer>false</organismsDiffer>
    <experiments>2</experiments>
</comment>
<comment type="interaction">
    <interactant intactId="EBI-356498">
        <id>P62258</id>
    </interactant>
    <interactant intactId="EBI-741421">
        <id>Q15154</id>
        <label>PCM1</label>
    </interactant>
    <organismsDiffer>false</organismsDiffer>
    <experiments>3</experiments>
</comment>
<comment type="interaction">
    <interactant intactId="EBI-356498">
        <id>P62258</id>
    </interactant>
    <interactant intactId="EBI-2861522">
        <id>P16234</id>
        <label>PDGFRA</label>
    </interactant>
    <organismsDiffer>false</organismsDiffer>
    <experiments>2</experiments>
</comment>
<comment type="interaction">
    <interactant intactId="EBI-356498">
        <id>P62258</id>
    </interactant>
    <interactant intactId="EBI-702235">
        <id>Q99959</id>
        <label>PKP2</label>
    </interactant>
    <organismsDiffer>false</organismsDiffer>
    <experiments>5</experiments>
</comment>
<comment type="interaction">
    <interactant intactId="EBI-356498">
        <id>P62258</id>
    </interactant>
    <interactant intactId="EBI-2125301">
        <id>Q6IQ23</id>
        <label>PLEKHA7</label>
    </interactant>
    <organismsDiffer>false</organismsDiffer>
    <experiments>7</experiments>
</comment>
<comment type="interaction">
    <interactant intactId="EBI-356498">
        <id>P62258</id>
    </interactant>
    <interactant intactId="EBI-476768">
        <id>P53350</id>
        <label>PLK1</label>
    </interactant>
    <organismsDiffer>false</organismsDiffer>
    <experiments>2</experiments>
</comment>
<comment type="interaction">
    <interactant intactId="EBI-356498">
        <id>P62258</id>
    </interactant>
    <interactant intactId="EBI-721354">
        <id>Q9NYY3</id>
        <label>PLK2</label>
    </interactant>
    <organismsDiffer>false</organismsDiffer>
    <experiments>2</experiments>
</comment>
<comment type="interaction">
    <interactant intactId="EBI-356498">
        <id>P62258</id>
    </interactant>
    <interactant intactId="EBI-746202">
        <id>O00444</id>
        <label>PLK4</label>
    </interactant>
    <organismsDiffer>false</organismsDiffer>
    <experiments>3</experiments>
</comment>
<comment type="interaction">
    <interactant intactId="EBI-356498">
        <id>P62258</id>
    </interactant>
    <interactant intactId="EBI-295890">
        <id>P29590</id>
        <label>PML</label>
    </interactant>
    <organismsDiffer>false</organismsDiffer>
    <experiments>2</experiments>
</comment>
<comment type="interaction">
    <interactant intactId="EBI-356498">
        <id>P62258</id>
    </interactant>
    <interactant intactId="EBI-1045582">
        <id>Q86W92</id>
        <label>PPFIBP1</label>
    </interactant>
    <organismsDiffer>false</organismsDiffer>
    <experiments>5</experiments>
</comment>
<comment type="interaction">
    <interactant intactId="EBI-356498">
        <id>P62258</id>
    </interactant>
    <interactant intactId="EBI-3956987">
        <id>O43314</id>
        <label>PPIP5K2</label>
    </interactant>
    <organismsDiffer>false</organismsDiffer>
    <experiments>2</experiments>
</comment>
<comment type="interaction">
    <interactant intactId="EBI-356498">
        <id>P62258</id>
    </interactant>
    <interactant intactId="EBI-719420">
        <id>Q86YV5</id>
        <label>PRAG1</label>
    </interactant>
    <organismsDiffer>false</organismsDiffer>
    <experiments>2</experiments>
</comment>
<comment type="interaction">
    <interactant intactId="EBI-356498">
        <id>P62258</id>
    </interactant>
    <interactant intactId="EBI-1383852">
        <id>P54646</id>
        <label>PRKAA2</label>
    </interactant>
    <organismsDiffer>false</organismsDiffer>
    <experiments>2</experiments>
</comment>
<comment type="interaction">
    <interactant intactId="EBI-356498">
        <id>P62258</id>
    </interactant>
    <interactant intactId="EBI-706254">
        <id>Q02156</id>
        <label>PRKCE</label>
    </interactant>
    <organismsDiffer>false</organismsDiffer>
    <experiments>4</experiments>
</comment>
<comment type="interaction">
    <interactant intactId="EBI-356498">
        <id>P62258</id>
    </interactant>
    <interactant intactId="EBI-949799">
        <id>P05129</id>
        <label>PRKCG</label>
    </interactant>
    <organismsDiffer>false</organismsDiffer>
    <experiments>2</experiments>
</comment>
<comment type="interaction">
    <interactant intactId="EBI-356498">
        <id>P62258</id>
    </interactant>
    <interactant intactId="EBI-298640">
        <id>Q14289</id>
        <label>PTK2B</label>
    </interactant>
    <organismsDiffer>false</organismsDiffer>
    <experiments>2</experiments>
</comment>
<comment type="interaction">
    <interactant intactId="EBI-356498">
        <id>P62258</id>
    </interactant>
    <interactant intactId="EBI-948453">
        <id>Q14671</id>
        <label>PUM1</label>
    </interactant>
    <organismsDiffer>false</organismsDiffer>
    <experiments>5</experiments>
</comment>
<comment type="interaction">
    <interactant intactId="EBI-356498">
        <id>P62258</id>
    </interactant>
    <interactant intactId="EBI-1049676">
        <id>Q7L804</id>
        <label>RAB11FIP2</label>
    </interactant>
    <organismsDiffer>false</organismsDiffer>
    <experiments>6</experiments>
</comment>
<comment type="interaction">
    <interactant intactId="EBI-356498">
        <id>P62258</id>
    </interactant>
    <interactant intactId="EBI-365996">
        <id>P04049</id>
        <label>RAF1</label>
    </interactant>
    <organismsDiffer>false</organismsDiffer>
    <experiments>24</experiments>
</comment>
<comment type="interaction">
    <interactant intactId="EBI-356498">
        <id>P62258</id>
    </interactant>
    <interactant intactId="EBI-1050841">
        <id>Q86X27</id>
        <label>RALGPS2</label>
    </interactant>
    <organismsDiffer>false</organismsDiffer>
    <experiments>3</experiments>
</comment>
<comment type="interaction">
    <interactant intactId="EBI-356498">
        <id>P62258</id>
    </interactant>
    <interactant intactId="EBI-1387196">
        <id>Q6R327</id>
        <label>RICTOR</label>
    </interactant>
    <organismsDiffer>false</organismsDiffer>
    <experiments>5</experiments>
</comment>
<comment type="interaction">
    <interactant intactId="EBI-356498">
        <id>P62258</id>
    </interactant>
    <interactant intactId="EBI-366017">
        <id>Q13671</id>
        <label>RIN1</label>
    </interactant>
    <organismsDiffer>false</organismsDiffer>
    <experiments>4</experiments>
</comment>
<comment type="interaction">
    <interactant intactId="EBI-356498">
        <id>P62258</id>
    </interactant>
    <interactant intactId="EBI-358522">
        <id>O43353</id>
        <label>RIPK2</label>
    </interactant>
    <organismsDiffer>false</organismsDiffer>
    <experiments>2</experiments>
</comment>
<comment type="interaction">
    <interactant intactId="EBI-356498">
        <id>P62258</id>
    </interactant>
    <interactant intactId="EBI-714023">
        <id>Q8N5U6</id>
        <label>RNF10</label>
    </interactant>
    <organismsDiffer>false</organismsDiffer>
    <experiments>2</experiments>
</comment>
<comment type="interaction">
    <interactant intactId="EBI-356498">
        <id>P62258</id>
    </interactant>
    <interactant intactId="EBI-42485571">
        <id>Q86T96</id>
        <label>RNF180</label>
    </interactant>
    <organismsDiffer>false</organismsDiffer>
    <experiments>2</experiments>
</comment>
<comment type="interaction">
    <interactant intactId="EBI-356498">
        <id>P62258</id>
    </interactant>
    <interactant intactId="EBI-1384149">
        <id>Q15349</id>
        <label>RPS6KA2</label>
    </interactant>
    <organismsDiffer>false</organismsDiffer>
    <experiments>2</experiments>
</comment>
<comment type="interaction">
    <interactant intactId="EBI-356498">
        <id>P62258</id>
    </interactant>
    <interactant intactId="EBI-1047497">
        <id>Q9UPU9</id>
        <label>SAMD4A</label>
    </interactant>
    <organismsDiffer>false</organismsDiffer>
    <experiments>5</experiments>
</comment>
<comment type="interaction">
    <interactant intactId="EBI-356498">
        <id>P62258</id>
    </interactant>
    <interactant intactId="EBI-1047489">
        <id>Q5PRF9</id>
        <label>SAMD4B</label>
    </interactant>
    <organismsDiffer>false</organismsDiffer>
    <experiments>6</experiments>
</comment>
<comment type="interaction">
    <interactant intactId="EBI-356498">
        <id>P62258</id>
    </interactant>
    <interactant intactId="EBI-476295">
        <id>P31947</id>
        <label>SFN</label>
    </interactant>
    <organismsDiffer>false</organismsDiffer>
    <experiments>5</experiments>
</comment>
<comment type="interaction">
    <interactant intactId="EBI-356498">
        <id>P62258</id>
    </interactant>
    <interactant intactId="EBI-1049513">
        <id>Q9P0V3</id>
        <label>SH3BP4</label>
    </interactant>
    <organismsDiffer>false</organismsDiffer>
    <experiments>4</experiments>
</comment>
<comment type="interaction">
    <interactant intactId="EBI-356498">
        <id>P62258</id>
    </interactant>
    <interactant intactId="EBI-311339">
        <id>Q7Z6J0</id>
        <label>SH3RF1</label>
    </interactant>
    <organismsDiffer>false</organismsDiffer>
    <experiments>3</experiments>
</comment>
<comment type="interaction">
    <interactant intactId="EBI-356498">
        <id>P62258</id>
    </interactant>
    <interactant intactId="EBI-724292">
        <id>Q8TBC3</id>
        <label>SHKBP1</label>
    </interactant>
    <organismsDiffer>false</organismsDiffer>
    <experiments>2</experiments>
</comment>
<comment type="interaction">
    <interactant intactId="EBI-356498">
        <id>P62258</id>
    </interactant>
    <interactant intactId="EBI-1181640">
        <id>P57059</id>
        <label>SIK1</label>
    </interactant>
    <organismsDiffer>false</organismsDiffer>
    <experiments>4</experiments>
</comment>
<comment type="interaction">
    <interactant intactId="EBI-356498">
        <id>P62258</id>
    </interactant>
    <interactant intactId="EBI-311323">
        <id>O94875</id>
        <label>SORBS2</label>
    </interactant>
    <organismsDiffer>false</organismsDiffer>
    <experiments>4</experiments>
</comment>
<comment type="interaction">
    <interactant intactId="EBI-356498">
        <id>P62258</id>
    </interactant>
    <interactant intactId="EBI-13618641">
        <id>Q96N96</id>
        <label>SPATA13</label>
    </interactant>
    <organismsDiffer>false</organismsDiffer>
    <experiments>4</experiments>
</comment>
<comment type="interaction">
    <interactant intactId="EBI-356498">
        <id>P62258</id>
    </interactant>
    <interactant intactId="EBI-2822128">
        <id>Q96JI7</id>
        <label>SPG11</label>
    </interactant>
    <organismsDiffer>false</organismsDiffer>
    <experiments>2</experiments>
</comment>
<comment type="interaction">
    <interactant intactId="EBI-356498">
        <id>P62258</id>
    </interactant>
    <interactant intactId="EBI-6381269">
        <id>Q9UPE1</id>
        <label>SRPK3</label>
    </interactant>
    <organismsDiffer>false</organismsDiffer>
    <experiments>4</experiments>
</comment>
<comment type="interaction">
    <interactant intactId="EBI-356498">
        <id>P62258</id>
    </interactant>
    <interactant intactId="EBI-353655">
        <id>O75494</id>
        <label>SRSF10</label>
    </interactant>
    <organismsDiffer>false</organismsDiffer>
    <experiments>3</experiments>
</comment>
<comment type="interaction">
    <interactant intactId="EBI-356498">
        <id>P62258</id>
    </interactant>
    <interactant intactId="EBI-2652799">
        <id>Q99469</id>
        <label>STAC</label>
    </interactant>
    <organismsDiffer>false</organismsDiffer>
    <experiments>4</experiments>
</comment>
<comment type="interaction">
    <interactant intactId="EBI-356498">
        <id>P62258</id>
    </interactant>
    <interactant intactId="EBI-1050045">
        <id>Q86UX6</id>
        <label>STK32C</label>
    </interactant>
    <organismsDiffer>false</organismsDiffer>
    <experiments>2</experiments>
</comment>
<comment type="interaction">
    <interactant intactId="EBI-356498">
        <id>P62258</id>
    </interactant>
    <interactant intactId="EBI-358643">
        <id>Q15750</id>
        <label>TAB1</label>
    </interactant>
    <organismsDiffer>false</organismsDiffer>
    <experiments>2</experiments>
</comment>
<comment type="interaction">
    <interactant intactId="EBI-356498">
        <id>P62258</id>
    </interactant>
    <interactant intactId="EBI-522028">
        <id>O60343</id>
        <label>TBC1D4</label>
    </interactant>
    <organismsDiffer>false</organismsDiffer>
    <experiments>6</experiments>
</comment>
<comment type="interaction">
    <interactant intactId="EBI-356498">
        <id>P62258</id>
    </interactant>
    <interactant intactId="EBI-354852">
        <id>Q15569</id>
        <label>TESK1</label>
    </interactant>
    <organismsDiffer>false</organismsDiffer>
    <experiments>2</experiments>
</comment>
<comment type="interaction">
    <interactant intactId="EBI-356498">
        <id>P62258</id>
    </interactant>
    <interactant intactId="EBI-1384110">
        <id>Q96S53</id>
        <label>TESK2</label>
    </interactant>
    <organismsDiffer>false</organismsDiffer>
    <experiments>5</experiments>
</comment>
<comment type="interaction">
    <interactant intactId="EBI-356498">
        <id>P62258</id>
    </interactant>
    <interactant intactId="EBI-2814208">
        <id>P19484</id>
        <label>TFEB</label>
    </interactant>
    <organismsDiffer>false</organismsDiffer>
    <experiments>5</experiments>
</comment>
<comment type="interaction">
    <interactant intactId="EBI-356498">
        <id>P62258</id>
    </interactant>
    <interactant intactId="EBI-527670">
        <id>P21580</id>
        <label>TNFAIP3</label>
    </interactant>
    <organismsDiffer>false</organismsDiffer>
    <experiments>3</experiments>
</comment>
<comment type="interaction">
    <interactant intactId="EBI-356498">
        <id>P62258</id>
    </interactant>
    <interactant intactId="EBI-1383444">
        <id>Q13470</id>
        <label>TNK1</label>
    </interactant>
    <organismsDiffer>false</organismsDiffer>
    <experiments>4</experiments>
</comment>
<comment type="interaction">
    <interactant intactId="EBI-356498">
        <id>P62258</id>
    </interactant>
    <interactant intactId="EBI-2130449">
        <id>Q6AZZ1</id>
        <label>TRIM68</label>
    </interactant>
    <organismsDiffer>false</organismsDiffer>
    <experiments>2</experiments>
</comment>
<comment type="interaction">
    <interactant intactId="EBI-356498">
        <id>P62258</id>
    </interactant>
    <interactant intactId="EBI-720828">
        <id>Q9C026</id>
        <label>TRIM9</label>
    </interactant>
    <organismsDiffer>false</organismsDiffer>
    <experiments>2</experiments>
</comment>
<comment type="interaction">
    <interactant intactId="EBI-356498">
        <id>P62258</id>
    </interactant>
    <interactant intactId="EBI-6423734">
        <id>Q9BXA7</id>
        <label>TSSK1B</label>
    </interactant>
    <organismsDiffer>false</organismsDiffer>
    <experiments>2</experiments>
</comment>
<comment type="interaction">
    <interactant intactId="EBI-356498">
        <id>P62258</id>
    </interactant>
    <interactant intactId="EBI-852089">
        <id>Q96PF2</id>
        <label>TSSK2</label>
    </interactant>
    <organismsDiffer>false</organismsDiffer>
    <experiments>2</experiments>
</comment>
<comment type="interaction">
    <interactant intactId="EBI-356498">
        <id>P62258</id>
    </interactant>
    <interactant intactId="EBI-1050865">
        <id>P40818</id>
        <label>USP8</label>
    </interactant>
    <organismsDiffer>false</organismsDiffer>
    <experiments>5</experiments>
</comment>
<comment type="interaction">
    <interactant intactId="EBI-356498">
        <id>P62258</id>
    </interactant>
    <interactant intactId="EBI-354158">
        <id>P21796</id>
        <label>VDAC1</label>
    </interactant>
    <organismsDiffer>false</organismsDiffer>
    <experiments>5</experiments>
</comment>
<comment type="interaction">
    <interactant intactId="EBI-356498">
        <id>P62258</id>
    </interactant>
    <interactant intactId="EBI-2515073">
        <id>Q6PJI9</id>
        <label>WDR59</label>
    </interactant>
    <organismsDiffer>false</organismsDiffer>
    <experiments>2</experiments>
</comment>
<comment type="interaction">
    <interactant intactId="EBI-356498">
        <id>P62258</id>
    </interactant>
    <interactant intactId="EBI-714790">
        <id>O43379</id>
        <label>WDR62</label>
    </interactant>
    <organismsDiffer>false</organismsDiffer>
    <experiments>5</experiments>
</comment>
<comment type="interaction">
    <interactant intactId="EBI-356498">
        <id>P62258</id>
    </interactant>
    <interactant intactId="EBI-914695">
        <id>P30291</id>
        <label>WEE1</label>
    </interactant>
    <organismsDiffer>false</organismsDiffer>
    <experiments>2</experiments>
</comment>
<comment type="interaction">
    <interactant intactId="EBI-356498">
        <id>P62258</id>
    </interactant>
    <interactant intactId="EBI-457907">
        <id>Q9H4A3</id>
        <label>WNK1</label>
    </interactant>
    <organismsDiffer>false</organismsDiffer>
    <experiments>7</experiments>
</comment>
<comment type="interaction">
    <interactant intactId="EBI-356498">
        <id>P62258</id>
    </interactant>
    <interactant intactId="EBI-766352">
        <id>Q96J92</id>
        <label>WNK4</label>
    </interactant>
    <organismsDiffer>false</organismsDiffer>
    <experiments>2</experiments>
</comment>
<comment type="interaction">
    <interactant intactId="EBI-356498">
        <id>P62258</id>
    </interactant>
    <interactant intactId="EBI-743923">
        <id>O00308</id>
        <label>WWP2</label>
    </interactant>
    <organismsDiffer>false</organismsDiffer>
    <experiments>2</experiments>
</comment>
<comment type="interaction">
    <interactant intactId="EBI-356498">
        <id>P62258</id>
    </interactant>
    <interactant intactId="EBI-747743">
        <id>Q9GZV5</id>
        <label>WWTR1</label>
    </interactant>
    <organismsDiffer>false</organismsDiffer>
    <experiments>4</experiments>
</comment>
<comment type="interaction">
    <interactant intactId="EBI-356498">
        <id>P62258</id>
    </interactant>
    <interactant intactId="EBI-1044059">
        <id>P46937</id>
        <label>YAP1</label>
    </interactant>
    <organismsDiffer>false</organismsDiffer>
    <experiments>9</experiments>
</comment>
<comment type="interaction">
    <interactant intactId="EBI-356498">
        <id>P62258</id>
    </interactant>
    <interactant intactId="EBI-359815">
        <id>P31946</id>
        <label>YWHAB</label>
    </interactant>
    <organismsDiffer>false</organismsDiffer>
    <experiments>15</experiments>
</comment>
<comment type="interaction">
    <interactant intactId="EBI-356498">
        <id>P62258</id>
    </interactant>
    <interactant intactId="EBI-356498">
        <id>P62258</id>
        <label>YWHAE</label>
    </interactant>
    <organismsDiffer>false</organismsDiffer>
    <experiments>3</experiments>
</comment>
<comment type="interaction">
    <interactant intactId="EBI-356498">
        <id>P62258</id>
    </interactant>
    <interactant intactId="EBI-359832">
        <id>P61981</id>
        <label>YWHAG</label>
    </interactant>
    <organismsDiffer>false</organismsDiffer>
    <experiments>17</experiments>
</comment>
<comment type="interaction">
    <interactant intactId="EBI-356498">
        <id>P62258</id>
    </interactant>
    <interactant intactId="EBI-306940">
        <id>Q04917</id>
        <label>YWHAH</label>
    </interactant>
    <organismsDiffer>false</organismsDiffer>
    <experiments>13</experiments>
</comment>
<comment type="interaction">
    <interactant intactId="EBI-356498">
        <id>P62258</id>
    </interactant>
    <interactant intactId="EBI-359854">
        <id>P27348</id>
        <label>YWHAQ</label>
    </interactant>
    <organismsDiffer>false</organismsDiffer>
    <experiments>14</experiments>
</comment>
<comment type="interaction">
    <interactant intactId="EBI-356498">
        <id>P62258</id>
    </interactant>
    <interactant intactId="EBI-347088">
        <id>P63104</id>
        <label>YWHAZ</label>
    </interactant>
    <organismsDiffer>false</organismsDiffer>
    <experiments>17</experiments>
</comment>
<comment type="interaction">
    <interactant intactId="EBI-356498">
        <id>P62258</id>
    </interactant>
    <interactant intactId="EBI-711925">
        <id>Q05516</id>
        <label>ZBTB16</label>
    </interactant>
    <organismsDiffer>false</organismsDiffer>
    <experiments>2</experiments>
</comment>
<comment type="interaction">
    <interactant intactId="EBI-356498">
        <id>P62258</id>
    </interactant>
    <interactant intactId="EBI-1644149">
        <id>P47974</id>
        <label>ZFP36L2</label>
    </interactant>
    <organismsDiffer>false</organismsDiffer>
    <experiments>5</experiments>
</comment>
<comment type="interaction">
    <interactant intactId="EBI-356498">
        <id>P62258</id>
    </interactant>
    <interactant intactId="EBI-719433">
        <id>Q86UK7</id>
        <label>ZNF598</label>
    </interactant>
    <organismsDiffer>false</organismsDiffer>
    <experiments>3</experiments>
</comment>
<comment type="interaction">
    <interactant intactId="EBI-356498">
        <id>P62258</id>
    </interactant>
    <interactant intactId="EBI-55031236">
        <id>C6K4R4</id>
        <label>cagA</label>
    </interactant>
    <organismsDiffer>true</organismsDiffer>
    <experiments>7</experiments>
</comment>
<comment type="interaction">
    <interactant intactId="EBI-356498">
        <id>P62258</id>
    </interactant>
    <interactant intactId="EBI-6930266">
        <id>P61588</id>
        <label>Rnd3</label>
    </interactant>
    <organismsDiffer>true</organismsDiffer>
    <experiments>2</experiments>
</comment>
<comment type="interaction">
    <interactant intactId="EBI-356498">
        <id>P62258</id>
    </interactant>
    <interactant intactId="EBI-9213553">
        <id>PRO_0000278742</id>
        <dbReference type="UniProtKB" id="O92972"/>
    </interactant>
    <organismsDiffer>true</organismsDiffer>
    <experiments>5</experiments>
</comment>
<comment type="subcellular location">
    <subcellularLocation>
        <location evidence="9 30">Nucleus</location>
    </subcellularLocation>
    <subcellularLocation>
        <location evidence="9">Cytoplasm</location>
    </subcellularLocation>
    <subcellularLocation>
        <location evidence="8 13">Melanosome</location>
    </subcellularLocation>
    <text evidence="8 13">Identified by mass spectrometry in melanosome fractions from stage I to stage IV.</text>
</comment>
<comment type="alternative products">
    <event type="alternative splicing"/>
    <isoform>
        <id>P62258-1</id>
        <name>1</name>
        <sequence type="displayed"/>
    </isoform>
    <isoform>
        <id>P62258-2</id>
        <name>SV</name>
        <sequence type="described" ref="VSP_040621"/>
    </isoform>
</comment>
<comment type="PTM">
    <text evidence="29">(Microbial infection) Cleaved by poliovirus protease 3C, leading to disruption of the interaction with RIGI.</text>
</comment>
<comment type="miscellaneous">
    <molecule>Isoform SV</molecule>
    <text evidence="34">Unable to dimerize with YWHAZ.</text>
</comment>
<comment type="similarity">
    <text evidence="34">Belongs to the 14-3-3 family.</text>
</comment>
<gene>
    <name type="primary">YWHAE</name>
</gene>
<feature type="chain" id="PRO_0000058618" description="14-3-3 protein epsilon">
    <location>
        <begin position="1"/>
        <end position="255"/>
    </location>
</feature>
<feature type="region of interest" description="Disordered" evidence="4">
    <location>
        <begin position="234"/>
        <end position="255"/>
    </location>
</feature>
<feature type="site" description="Interaction with phosphoserine on interacting protein">
    <location>
        <position position="57"/>
    </location>
</feature>
<feature type="site" description="Interaction with phosphoserine on interacting protein">
    <location>
        <position position="130"/>
    </location>
</feature>
<feature type="site" description="(Microbial infection) Cleavage; by poliovirus protease 3C" evidence="29">
    <location>
        <begin position="236"/>
        <end position="237"/>
    </location>
</feature>
<feature type="modified residue" description="N-acetylmethionine" evidence="31 35">
    <location>
        <position position="1"/>
    </location>
</feature>
<feature type="modified residue" description="N6-acetyllysine; alternate" evidence="36">
    <location>
        <position position="50"/>
    </location>
</feature>
<feature type="modified residue" description="Phosphoserine" evidence="2">
    <location>
        <position position="65"/>
    </location>
</feature>
<feature type="modified residue" description="N6-acetyllysine" evidence="36">
    <location>
        <position position="69"/>
    </location>
</feature>
<feature type="modified residue" description="N6-acetyllysine" evidence="36">
    <location>
        <position position="118"/>
    </location>
</feature>
<feature type="modified residue" description="N6-acetyllysine" evidence="36">
    <location>
        <position position="123"/>
    </location>
</feature>
<feature type="modified residue" description="Phosphotyrosine" evidence="2">
    <location>
        <position position="131"/>
    </location>
</feature>
<feature type="modified residue" description="Phosphothreonine" evidence="2">
    <location>
        <position position="137"/>
    </location>
</feature>
<feature type="modified residue" description="Phosphoserine" evidence="37 38 39">
    <location>
        <position position="210"/>
    </location>
</feature>
<feature type="modified residue" description="Phosphothreonine" evidence="40">
    <location>
        <position position="232"/>
    </location>
</feature>
<feature type="cross-link" description="Glycyl lysine isopeptide (Lys-Gly) (interchain with G-Cter in SUMO2); alternate" evidence="41">
    <location>
        <position position="50"/>
    </location>
</feature>
<feature type="splice variant" id="VSP_040621" description="In isoform SV." evidence="32 33">
    <location>
        <begin position="1"/>
        <end position="22"/>
    </location>
</feature>
<feature type="mutagenesis site" description="Complete loss of cleavage by poliovirus protease 3C." evidence="29">
    <original>Q</original>
    <variation>A</variation>
    <location>
        <position position="236"/>
    </location>
</feature>
<feature type="sequence conflict" description="In Ref. 15; AA sequence." evidence="34" ref="15">
    <original>KH</original>
    <variation>NY</variation>
    <location>
        <begin position="106"/>
        <end position="107"/>
    </location>
</feature>
<feature type="sequence conflict" description="In Ref. 15; AA sequence." evidence="34" ref="15">
    <original>E</original>
    <variation>F</variation>
    <location>
        <position position="143"/>
    </location>
</feature>
<feature type="sequence conflict" description="In Ref. 15; AA sequence." evidence="34" ref="15">
    <original>S</original>
    <variation>T</variation>
    <location>
        <position position="148"/>
    </location>
</feature>
<feature type="helix" evidence="42">
    <location>
        <begin position="4"/>
        <end position="17"/>
    </location>
</feature>
<feature type="helix" evidence="42">
    <location>
        <begin position="20"/>
        <end position="31"/>
    </location>
</feature>
<feature type="strand" evidence="43">
    <location>
        <begin position="33"/>
        <end position="35"/>
    </location>
</feature>
<feature type="helix" evidence="42">
    <location>
        <begin position="39"/>
        <end position="73"/>
    </location>
</feature>
<feature type="helix" evidence="42">
    <location>
        <begin position="76"/>
        <end position="106"/>
    </location>
</feature>
<feature type="helix" evidence="42">
    <location>
        <begin position="108"/>
        <end position="111"/>
    </location>
</feature>
<feature type="helix" evidence="42">
    <location>
        <begin position="115"/>
        <end position="135"/>
    </location>
</feature>
<feature type="helix" evidence="42">
    <location>
        <begin position="138"/>
        <end position="162"/>
    </location>
</feature>
<feature type="helix" evidence="42">
    <location>
        <begin position="168"/>
        <end position="183"/>
    </location>
</feature>
<feature type="helix" evidence="42">
    <location>
        <begin position="188"/>
        <end position="204"/>
    </location>
</feature>
<feature type="helix" evidence="42">
    <location>
        <begin position="205"/>
        <end position="208"/>
    </location>
</feature>
<feature type="turn" evidence="42">
    <location>
        <begin position="211"/>
        <end position="213"/>
    </location>
</feature>
<feature type="helix" evidence="42">
    <location>
        <begin position="214"/>
        <end position="231"/>
    </location>
</feature>